<feature type="chain" id="PRO_0000030425" description="Cell division control protein 42 homolog">
    <location>
        <begin position="1"/>
        <end position="188"/>
    </location>
</feature>
<feature type="propeptide" id="PRO_0000030426" description="Removed in mature form">
    <location>
        <begin position="189"/>
        <end position="191"/>
    </location>
</feature>
<feature type="short sequence motif" description="Effector region" evidence="4">
    <location>
        <begin position="32"/>
        <end position="40"/>
    </location>
</feature>
<feature type="binding site">
    <location>
        <begin position="10"/>
        <end position="17"/>
    </location>
    <ligand>
        <name>GTP</name>
        <dbReference type="ChEBI" id="CHEBI:37565"/>
    </ligand>
</feature>
<feature type="binding site" evidence="1">
    <location>
        <begin position="57"/>
        <end position="61"/>
    </location>
    <ligand>
        <name>GTP</name>
        <dbReference type="ChEBI" id="CHEBI:37565"/>
    </ligand>
</feature>
<feature type="binding site">
    <location>
        <begin position="115"/>
        <end position="118"/>
    </location>
    <ligand>
        <name>GTP</name>
        <dbReference type="ChEBI" id="CHEBI:37565"/>
    </ligand>
</feature>
<feature type="modified residue" description="(Microbial infection) O-AMP-tyrosine; by Haemophilus IbpA; alternate" evidence="21 24">
    <location>
        <position position="32"/>
    </location>
</feature>
<feature type="modified residue" description="(Microbial infection) O-AMP-threonine; by Vibrio VopS" evidence="20">
    <location>
        <position position="35"/>
    </location>
</feature>
<feature type="modified residue" description="Phosphotyrosine; by SRC" evidence="15">
    <location>
        <position position="64"/>
    </location>
</feature>
<feature type="modified residue" description="Cysteine methyl ester" evidence="7 50">
    <location>
        <position position="188"/>
    </location>
</feature>
<feature type="lipid moiety-binding region" description="S-geranylgeranyl cysteine" evidence="7 50">
    <location>
        <position position="188"/>
    </location>
</feature>
<feature type="glycosylation site" description="(Microbial infection) O-linked (GlcNAc) tyrosine; by Photorhabdus PAU_02230; alternate" evidence="32">
    <location>
        <position position="32"/>
    </location>
</feature>
<feature type="glycosylation site" description="(Microbial infection) O-alpha-linked (GlcNAc) threonine; by C.novyi toxin TcdA; alternate" evidence="42">
    <location>
        <position position="35"/>
    </location>
</feature>
<feature type="glycosylation site" description="(Microbial infection) O-linked (Glc) threonine; by C.difficile toxins TcdA and TcdB; alternate" evidence="33 40 41">
    <location>
        <position position="35"/>
    </location>
</feature>
<feature type="splice variant" id="VSP_040583" description="In isoform 1." evidence="43 44 45">
    <original>K</original>
    <variation>R</variation>
    <location>
        <position position="163"/>
    </location>
</feature>
<feature type="splice variant" id="VSP_040584" description="In isoform 1." evidence="43 44 45">
    <original>PKKSRRCVLL</original>
    <variation>TQPKRKCCIF</variation>
    <location>
        <begin position="182"/>
        <end position="191"/>
    </location>
</feature>
<feature type="sequence variant" id="VAR_076337" description="In TKS; dbSNP:rs864309721." evidence="34 36">
    <original>Y</original>
    <variation>C</variation>
    <location>
        <position position="64"/>
    </location>
</feature>
<feature type="mutagenesis site" description="Constitutively active. Interacts with PARD6 proteins. Does not inhibit filopodia formation. No effect on NR3C2 transcriptional activity." evidence="9 16 19">
    <original>G</original>
    <variation>V</variation>
    <location>
        <position position="12"/>
    </location>
</feature>
<feature type="mutagenesis site" description="Constitutively inactive. Does not interact with PARD6 proteins. Inhibits filopodia formation. No effect on NR3C2 transcriptional activity." evidence="11 16 19">
    <original>T</original>
    <variation>N</variation>
    <location>
        <position position="17"/>
    </location>
</feature>
<feature type="mutagenesis site" description="Abolishes AMPylation by Haemophilus IbpA." evidence="21">
    <original>Y</original>
    <variation>F</variation>
    <location>
        <position position="32"/>
    </location>
</feature>
<feature type="mutagenesis site" description="Constitutively active. Interacts with PARD6 proteins." evidence="11">
    <original>Q</original>
    <variation>L</variation>
    <location>
        <position position="61"/>
    </location>
</feature>
<feature type="strand" evidence="53">
    <location>
        <begin position="2"/>
        <end position="11"/>
    </location>
</feature>
<feature type="helix" evidence="57">
    <location>
        <begin position="12"/>
        <end position="14"/>
    </location>
</feature>
<feature type="helix" evidence="53">
    <location>
        <begin position="16"/>
        <end position="25"/>
    </location>
</feature>
<feature type="helix" evidence="56">
    <location>
        <begin position="29"/>
        <end position="31"/>
    </location>
</feature>
<feature type="strand" evidence="53">
    <location>
        <begin position="36"/>
        <end position="46"/>
    </location>
</feature>
<feature type="strand" evidence="53">
    <location>
        <begin position="49"/>
        <end position="58"/>
    </location>
</feature>
<feature type="helix" evidence="53">
    <location>
        <begin position="62"/>
        <end position="64"/>
    </location>
</feature>
<feature type="turn" evidence="53">
    <location>
        <begin position="65"/>
        <end position="67"/>
    </location>
</feature>
<feature type="helix" evidence="53">
    <location>
        <begin position="68"/>
        <end position="71"/>
    </location>
</feature>
<feature type="strand" evidence="55">
    <location>
        <begin position="72"/>
        <end position="74"/>
    </location>
</feature>
<feature type="strand" evidence="53">
    <location>
        <begin position="76"/>
        <end position="83"/>
    </location>
</feature>
<feature type="helix" evidence="53">
    <location>
        <begin position="87"/>
        <end position="95"/>
    </location>
</feature>
<feature type="helix" evidence="53">
    <location>
        <begin position="97"/>
        <end position="104"/>
    </location>
</feature>
<feature type="strand" evidence="54">
    <location>
        <begin position="105"/>
        <end position="107"/>
    </location>
</feature>
<feature type="strand" evidence="53">
    <location>
        <begin position="110"/>
        <end position="115"/>
    </location>
</feature>
<feature type="helix" evidence="53">
    <location>
        <begin position="117"/>
        <end position="121"/>
    </location>
</feature>
<feature type="helix" evidence="53">
    <location>
        <begin position="123"/>
        <end position="130"/>
    </location>
</feature>
<feature type="turn" evidence="53">
    <location>
        <begin position="131"/>
        <end position="133"/>
    </location>
</feature>
<feature type="helix" evidence="53">
    <location>
        <begin position="139"/>
        <end position="148"/>
    </location>
</feature>
<feature type="strand" evidence="53">
    <location>
        <begin position="154"/>
        <end position="156"/>
    </location>
</feature>
<feature type="turn" evidence="53">
    <location>
        <begin position="159"/>
        <end position="161"/>
    </location>
</feature>
<feature type="turn" evidence="52">
    <location>
        <begin position="162"/>
        <end position="164"/>
    </location>
</feature>
<feature type="helix" evidence="53">
    <location>
        <begin position="165"/>
        <end position="176"/>
    </location>
</feature>
<feature type="strand" evidence="51">
    <location>
        <begin position="179"/>
        <end position="181"/>
    </location>
</feature>
<feature type="turn" evidence="51">
    <location>
        <begin position="184"/>
        <end position="186"/>
    </location>
</feature>
<proteinExistence type="evidence at protein level"/>
<organism>
    <name type="scientific">Homo sapiens</name>
    <name type="common">Human</name>
    <dbReference type="NCBI Taxonomy" id="9606"/>
    <lineage>
        <taxon>Eukaryota</taxon>
        <taxon>Metazoa</taxon>
        <taxon>Chordata</taxon>
        <taxon>Craniata</taxon>
        <taxon>Vertebrata</taxon>
        <taxon>Euteleostomi</taxon>
        <taxon>Mammalia</taxon>
        <taxon>Eutheria</taxon>
        <taxon>Euarchontoglires</taxon>
        <taxon>Primates</taxon>
        <taxon>Haplorrhini</taxon>
        <taxon>Catarrhini</taxon>
        <taxon>Hominidae</taxon>
        <taxon>Homo</taxon>
    </lineage>
</organism>
<evidence type="ECO:0000250" key="1"/>
<evidence type="ECO:0000250" key="2">
    <source>
        <dbReference type="UniProtKB" id="P60766"/>
    </source>
</evidence>
<evidence type="ECO:0000250" key="3">
    <source>
        <dbReference type="UniProtKB" id="Q8CFN2"/>
    </source>
</evidence>
<evidence type="ECO:0000255" key="4"/>
<evidence type="ECO:0000269" key="5">
    <source>
    </source>
</evidence>
<evidence type="ECO:0000269" key="6">
    <source>
    </source>
</evidence>
<evidence type="ECO:0000269" key="7">
    <source>
    </source>
</evidence>
<evidence type="ECO:0000269" key="8">
    <source>
    </source>
</evidence>
<evidence type="ECO:0000269" key="9">
    <source>
    </source>
</evidence>
<evidence type="ECO:0000269" key="10">
    <source>
    </source>
</evidence>
<evidence type="ECO:0000269" key="11">
    <source>
    </source>
</evidence>
<evidence type="ECO:0000269" key="12">
    <source>
    </source>
</evidence>
<evidence type="ECO:0000269" key="13">
    <source>
    </source>
</evidence>
<evidence type="ECO:0000269" key="14">
    <source>
    </source>
</evidence>
<evidence type="ECO:0000269" key="15">
    <source>
    </source>
</evidence>
<evidence type="ECO:0000269" key="16">
    <source>
    </source>
</evidence>
<evidence type="ECO:0000269" key="17">
    <source>
    </source>
</evidence>
<evidence type="ECO:0000269" key="18">
    <source>
    </source>
</evidence>
<evidence type="ECO:0000269" key="19">
    <source>
    </source>
</evidence>
<evidence type="ECO:0000269" key="20">
    <source>
    </source>
</evidence>
<evidence type="ECO:0000269" key="21">
    <source>
    </source>
</evidence>
<evidence type="ECO:0000269" key="22">
    <source>
    </source>
</evidence>
<evidence type="ECO:0000269" key="23">
    <source>
    </source>
</evidence>
<evidence type="ECO:0000269" key="24">
    <source>
    </source>
</evidence>
<evidence type="ECO:0000269" key="25">
    <source>
    </source>
</evidence>
<evidence type="ECO:0000269" key="26">
    <source>
    </source>
</evidence>
<evidence type="ECO:0000269" key="27">
    <source>
    </source>
</evidence>
<evidence type="ECO:0000269" key="28">
    <source>
    </source>
</evidence>
<evidence type="ECO:0000269" key="29">
    <source>
    </source>
</evidence>
<evidence type="ECO:0000269" key="30">
    <source>
    </source>
</evidence>
<evidence type="ECO:0000269" key="31">
    <source>
    </source>
</evidence>
<evidence type="ECO:0000269" key="32">
    <source>
    </source>
</evidence>
<evidence type="ECO:0000269" key="33">
    <source>
    </source>
</evidence>
<evidence type="ECO:0000269" key="34">
    <source>
    </source>
</evidence>
<evidence type="ECO:0000269" key="35">
    <source>
    </source>
</evidence>
<evidence type="ECO:0000269" key="36">
    <source>
    </source>
</evidence>
<evidence type="ECO:0000269" key="37">
    <source>
    </source>
</evidence>
<evidence type="ECO:0000269" key="38">
    <source>
    </source>
</evidence>
<evidence type="ECO:0000269" key="39">
    <source>
    </source>
</evidence>
<evidence type="ECO:0000269" key="40">
    <source>
    </source>
</evidence>
<evidence type="ECO:0000269" key="41">
    <source>
    </source>
</evidence>
<evidence type="ECO:0000269" key="42">
    <source>
    </source>
</evidence>
<evidence type="ECO:0000303" key="43">
    <source>
    </source>
</evidence>
<evidence type="ECO:0000303" key="44">
    <source ref="3"/>
</evidence>
<evidence type="ECO:0000303" key="45">
    <source ref="4"/>
</evidence>
<evidence type="ECO:0000305" key="46"/>
<evidence type="ECO:0000305" key="47">
    <source>
    </source>
</evidence>
<evidence type="ECO:0000305" key="48">
    <source>
    </source>
</evidence>
<evidence type="ECO:0000312" key="49">
    <source>
        <dbReference type="HGNC" id="HGNC:1736"/>
    </source>
</evidence>
<evidence type="ECO:0007744" key="50">
    <source>
        <dbReference type="PDB" id="1DOA"/>
    </source>
</evidence>
<evidence type="ECO:0007829" key="51">
    <source>
        <dbReference type="PDB" id="1NF3"/>
    </source>
</evidence>
<evidence type="ECO:0007829" key="52">
    <source>
        <dbReference type="PDB" id="2KB0"/>
    </source>
</evidence>
<evidence type="ECO:0007829" key="53">
    <source>
        <dbReference type="PDB" id="2NGR"/>
    </source>
</evidence>
<evidence type="ECO:0007829" key="54">
    <source>
        <dbReference type="PDB" id="2WMN"/>
    </source>
</evidence>
<evidence type="ECO:0007829" key="55">
    <source>
        <dbReference type="PDB" id="3QBV"/>
    </source>
</evidence>
<evidence type="ECO:0007829" key="56">
    <source>
        <dbReference type="PDB" id="3VHL"/>
    </source>
</evidence>
<evidence type="ECO:0007829" key="57">
    <source>
        <dbReference type="PDB" id="6TKY"/>
    </source>
</evidence>
<accession>P60953</accession>
<accession>P21181</accession>
<accession>P25763</accession>
<accession>Q7L8R5</accession>
<accession>Q9UDI2</accession>
<protein>
    <recommendedName>
        <fullName evidence="46">Cell division control protein 42 homolog</fullName>
        <ecNumber evidence="27 31">3.6.5.2</ecNumber>
    </recommendedName>
    <alternativeName>
        <fullName>G25K GTP-binding protein</fullName>
    </alternativeName>
</protein>
<comment type="function">
    <text evidence="2 3 16 17 18 29 35 37 38">Plasma membrane-associated small GTPase which cycles between an active GTP-bound and an inactive GDP-bound state. In active state binds to a variety of effector proteins to regulate cellular responses. Involved in epithelial cell polarization processes. Regulates the bipolar attachment of spindle microtubules to kinetochores before chromosome congression in metaphase (PubMed:15642749). Regulates cell migration (PubMed:17038317, PubMed:22843693). In neurons, plays a role in the extension and maintenance of the formation of filopodia, thin and actin-rich surface projections (PubMed:14978216). Required for DOCK10-mediated spine formation in Purkinje cells and hippocampal neurons. In podocytes, facilitates filopodia and podosomes formation upon DOCK11-activation (PubMed:33523862). Upon activation by CaMKII, modulates dendritic spine structural plasticity by relaying CaMKII transient activation to synapse-specific, long-term signaling (By similarity). Also plays a role in phagocytosis through organization of the F-actin cytoskeleton associated with forming phagocytic cups (PubMed:26465210). Upon activation by PLEKHG4B, involved in actin cytoskeletal remodeling during epithelial cell-cell junction formation (PubMed:33310911).</text>
</comment>
<comment type="catalytic activity">
    <reaction evidence="27 31">
        <text>GTP + H2O = GDP + phosphate + H(+)</text>
        <dbReference type="Rhea" id="RHEA:19669"/>
        <dbReference type="ChEBI" id="CHEBI:15377"/>
        <dbReference type="ChEBI" id="CHEBI:15378"/>
        <dbReference type="ChEBI" id="CHEBI:37565"/>
        <dbReference type="ChEBI" id="CHEBI:43474"/>
        <dbReference type="ChEBI" id="CHEBI:58189"/>
        <dbReference type="EC" id="3.6.5.2"/>
    </reaction>
    <physiologicalReaction direction="left-to-right" evidence="47 48">
        <dbReference type="Rhea" id="RHEA:19670"/>
    </physiologicalReaction>
</comment>
<comment type="activity regulation">
    <text evidence="13">Regulated by guanine nucleotide exchange factors (GEFs) which promote the exchange of bound GDP for free GTP, GTPase activating proteins (GAPs) which increase the GTP hydrolysis activity, and GDP dissociation inhibitors which inhibit the dissociation of the nucleotide from the GTPase.</text>
</comment>
<comment type="subunit">
    <text evidence="2 5 6 8 9 10 11 12 13 14 18 22 23 25 26 28 29 30 39">Interacts with CDC42EP1, CDC42EP2, CDC42EP3, CDC42EP4, CDC42EP5, CDC42SE1, CDC42SE2, PARD6A, PARD6B and PARD6G (in a GTP-dependent manner) (PubMed:10490598, PubMed:10816584, PubMed:10954424, PubMed:11260256). Interacts with activated CSPG4 and with BAIAP2 (PubMed:10587647, PubMed:11130076). Interacts with activated CSPG4 and with BAIAP2 (By similarity). Interacts with DOCK11/Zizimin2; the interaction activates CDC42 by exchanging GDP for GTP (By similarity). Interacts with DOCK9; the interaction activates CDC42 by exchanging GDP for GTP (PubMed:12172552, PubMed:19745154). Interacts with DOCK8 (via DHR-2 domain); the interaction activates CDC42 by exchanging GDP for GTP (PubMed:12172552). Interacts with IQGAP1 (By similarity). Interacts with NET1 and ARHGAP33/TCGAP (By similarity). Part of a complex with PARD3, PARD6A or PARD6B and PRKCI or PRKCZ (PubMed:11260256). The GTP-bound form interacts with CCPG1 (By similarity). Interacts with USP6 (PubMed:12612085). Interacts with NEK6 (PubMed:20873783). Part of a collagen stimulated complex involved in cell migration composed of CDC42, CRK, TNK2 and BCAR1/p130cas (PubMed:17038317). Interacts with ITGB1BP1 (PubMed:11807099). Interacts with ARHGDIA; this interaction inactivates and stabilizes CDC42 (PubMed:23434736). Interacts with ARHGDIB; this maintains CDC42 in the inactive, GDP-bound form (PubMed:7512369). Interacts (in GTP-bound form) with FNBP1L and ABI1, but only in the presence of FNBP1L (PubMed:19798448). May interact with ARHGEF16; responsible for the activation of CDC42 by the viral protein HPV16 E6 (PubMed:21139582). Interacts with MARCKS (By similarity). Interacts with CD151 and ITGB1 (PubMed:22843693).</text>
</comment>
<comment type="interaction">
    <interactant intactId="EBI-81752">
        <id>P60953</id>
    </interactant>
    <interactant intactId="EBI-784112">
        <id>O95477</id>
        <label>ABCA1</label>
    </interactant>
    <organismsDiffer>false</organismsDiffer>
    <experiments>2</experiments>
</comment>
<comment type="interaction">
    <interactant intactId="EBI-81752">
        <id>P60953</id>
    </interactant>
    <interactant intactId="EBI-727707">
        <id>P25054</id>
        <label>APC</label>
    </interactant>
    <organismsDiffer>false</organismsDiffer>
    <experiments>9</experiments>
</comment>
<comment type="interaction">
    <interactant intactId="EBI-81752">
        <id>P60953</id>
    </interactant>
    <interactant intactId="EBI-712693">
        <id>P52565</id>
        <label>ARHGDIA</label>
    </interactant>
    <organismsDiffer>false</organismsDiffer>
    <experiments>4</experiments>
</comment>
<comment type="interaction">
    <interactant intactId="EBI-81752">
        <id>P60953</id>
    </interactant>
    <interactant intactId="EBI-525456">
        <id>Q9UQB8</id>
        <label>BAIAP2</label>
    </interactant>
    <organismsDiffer>false</organismsDiffer>
    <experiments>2</experiments>
</comment>
<comment type="interaction">
    <interactant intactId="EBI-81752">
        <id>P60953</id>
    </interactant>
    <interactant intactId="EBI-6174091">
        <id>Q9UQB8-4</id>
        <label>BAIAP2</label>
    </interactant>
    <organismsDiffer>false</organismsDiffer>
    <experiments>4</experiments>
</comment>
<comment type="interaction">
    <interactant intactId="EBI-81752">
        <id>P60953</id>
    </interactant>
    <interactant intactId="EBI-81752">
        <id>P60953</id>
        <label>CDC42</label>
    </interactant>
    <organismsDiffer>false</organismsDiffer>
    <experiments>2</experiments>
</comment>
<comment type="interaction">
    <interactant intactId="EBI-81752">
        <id>P60953</id>
    </interactant>
    <interactant intactId="EBI-689171">
        <id>Q5VT25</id>
        <label>CDC42BPA</label>
    </interactant>
    <organismsDiffer>false</organismsDiffer>
    <experiments>6</experiments>
</comment>
<comment type="interaction">
    <interactant intactId="EBI-81752">
        <id>P60953</id>
    </interactant>
    <interactant intactId="EBI-744130">
        <id>Q00587</id>
        <label>CDC42EP1</label>
    </interactant>
    <organismsDiffer>false</organismsDiffer>
    <experiments>9</experiments>
</comment>
<comment type="interaction">
    <interactant intactId="EBI-81752">
        <id>P60953</id>
    </interactant>
    <interactant intactId="EBI-11027409">
        <id>Q00587-2</id>
        <label>CDC42EP1</label>
    </interactant>
    <organismsDiffer>false</organismsDiffer>
    <experiments>3</experiments>
</comment>
<comment type="interaction">
    <interactant intactId="EBI-81752">
        <id>P60953</id>
    </interactant>
    <interactant intactId="EBI-3438291">
        <id>O14613</id>
        <label>CDC42EP2</label>
    </interactant>
    <organismsDiffer>false</organismsDiffer>
    <experiments>10</experiments>
</comment>
<comment type="interaction">
    <interactant intactId="EBI-81752">
        <id>P60953</id>
    </interactant>
    <interactant intactId="EBI-3438318">
        <id>Q9NRR8</id>
        <label>CDC42SE1</label>
    </interactant>
    <organismsDiffer>false</organismsDiffer>
    <experiments>3</experiments>
</comment>
<comment type="interaction">
    <interactant intactId="EBI-81752">
        <id>P60953</id>
    </interactant>
    <interactant intactId="EBI-12094670">
        <id>Q8WUI4-6</id>
        <label>HDAC7</label>
    </interactant>
    <organismsDiffer>false</organismsDiffer>
    <experiments>3</experiments>
</comment>
<comment type="interaction">
    <interactant intactId="EBI-81752">
        <id>P60953</id>
    </interactant>
    <interactant intactId="EBI-297509">
        <id>P46940</id>
        <label>IQGAP1</label>
    </interactant>
    <organismsDiffer>false</organismsDiffer>
    <experiments>12</experiments>
</comment>
<comment type="interaction">
    <interactant intactId="EBI-81752">
        <id>P60953</id>
    </interactant>
    <interactant intactId="EBI-5323863">
        <id>Q5S007</id>
        <label>LRRK2</label>
    </interactant>
    <organismsDiffer>false</organismsDiffer>
    <experiments>3</experiments>
</comment>
<comment type="interaction">
    <interactant intactId="EBI-81752">
        <id>P60953</id>
    </interactant>
    <interactant intactId="EBI-49961">
        <id>Q16584</id>
        <label>MAP3K11</label>
    </interactant>
    <organismsDiffer>false</organismsDiffer>
    <experiments>3</experiments>
</comment>
<comment type="interaction">
    <interactant intactId="EBI-81752">
        <id>P60953</id>
    </interactant>
    <interactant intactId="EBI-302319">
        <id>Q96L34</id>
        <label>MARK4</label>
    </interactant>
    <organismsDiffer>false</organismsDiffer>
    <experiments>2</experiments>
</comment>
<comment type="interaction">
    <interactant intactId="EBI-81752">
        <id>P60953</id>
    </interactant>
    <interactant intactId="EBI-1307">
        <id>Q13153</id>
        <label>PAK1</label>
    </interactant>
    <organismsDiffer>false</organismsDiffer>
    <experiments>12</experiments>
</comment>
<comment type="interaction">
    <interactant intactId="EBI-81752">
        <id>P60953</id>
    </interactant>
    <interactant intactId="EBI-1045887">
        <id>Q13177</id>
        <label>PAK2</label>
    </interactant>
    <organismsDiffer>false</organismsDiffer>
    <experiments>8</experiments>
</comment>
<comment type="interaction">
    <interactant intactId="EBI-81752">
        <id>P60953</id>
    </interactant>
    <interactant intactId="EBI-713738">
        <id>O96013</id>
        <label>PAK4</label>
    </interactant>
    <organismsDiffer>false</organismsDiffer>
    <experiments>4</experiments>
</comment>
<comment type="interaction">
    <interactant intactId="EBI-81752">
        <id>P60953</id>
    </interactant>
    <interactant intactId="EBI-741896">
        <id>Q9P286</id>
        <label>PAK5</label>
    </interactant>
    <organismsDiffer>false</organismsDiffer>
    <experiments>5</experiments>
</comment>
<comment type="interaction">
    <interactant intactId="EBI-81752">
        <id>P60953</id>
    </interactant>
    <interactant intactId="EBI-1053685">
        <id>Q9NQU5</id>
        <label>PAK6</label>
    </interactant>
    <organismsDiffer>false</organismsDiffer>
    <experiments>4</experiments>
</comment>
<comment type="interaction">
    <interactant intactId="EBI-81752">
        <id>P60953</id>
    </interactant>
    <interactant intactId="EBI-81876">
        <id>Q9NPB6</id>
        <label>PARD6A</label>
    </interactant>
    <organismsDiffer>false</organismsDiffer>
    <experiments>7</experiments>
</comment>
<comment type="interaction">
    <interactant intactId="EBI-81752">
        <id>P60953</id>
    </interactant>
    <interactant intactId="EBI-295391">
        <id>Q9BYG5</id>
        <label>PARD6B</label>
    </interactant>
    <organismsDiffer>false</organismsDiffer>
    <experiments>18</experiments>
</comment>
<comment type="interaction">
    <interactant intactId="EBI-81752">
        <id>P60953</id>
    </interactant>
    <interactant intactId="EBI-295417">
        <id>Q9BYG4</id>
        <label>PARD6G</label>
    </interactant>
    <organismsDiffer>false</organismsDiffer>
    <experiments>5</experiments>
</comment>
<comment type="interaction">
    <interactant intactId="EBI-81752">
        <id>P60953</id>
    </interactant>
    <interactant intactId="EBI-286199">
        <id>P41743</id>
        <label>PRKCI</label>
    </interactant>
    <organismsDiffer>false</organismsDiffer>
    <experiments>5</experiments>
</comment>
<comment type="interaction">
    <interactant intactId="EBI-81752">
        <id>P60953</id>
    </interactant>
    <interactant intactId="EBI-365845">
        <id>Q92963</id>
        <label>RIT1</label>
    </interactant>
    <organismsDiffer>false</organismsDiffer>
    <experiments>6</experiments>
</comment>
<comment type="interaction">
    <interactant intactId="EBI-81752">
        <id>P60953</id>
    </interactant>
    <interactant intactId="EBI-346375">
        <id>P42768</id>
        <label>WAS</label>
    </interactant>
    <organismsDiffer>false</organismsDiffer>
    <experiments>12</experiments>
</comment>
<comment type="interaction">
    <interactant intactId="EBI-81752">
        <id>P60953</id>
    </interactant>
    <interactant intactId="EBI-957615">
        <id>O00401</id>
        <label>WASL</label>
    </interactant>
    <organismsDiffer>false</organismsDiffer>
    <experiments>3</experiments>
</comment>
<comment type="interaction">
    <interactant intactId="EBI-81752">
        <id>P60953</id>
    </interactant>
    <interactant intactId="EBI-129424">
        <id>Q9VEX9</id>
        <label>Bin1</label>
    </interactant>
    <organismsDiffer>true</organismsDiffer>
    <experiments>2</experiments>
</comment>
<comment type="interaction">
    <interactant intactId="EBI-81752">
        <id>P60953</id>
    </interactant>
    <interactant intactId="EBI-457317">
        <id>Q61036</id>
        <label>Pak3</label>
    </interactant>
    <organismsDiffer>true</organismsDiffer>
    <experiments>3</experiments>
</comment>
<comment type="interaction">
    <interactant intactId="EBI-81752">
        <id>P60953</id>
    </interactant>
    <interactant intactId="EBI-81861">
        <id>Q9JK83</id>
        <label>Pard6b</label>
    </interactant>
    <organismsDiffer>true</organismsDiffer>
    <experiments>6</experiments>
</comment>
<comment type="interaction">
    <interactant intactId="EBI-81752">
        <id>P60953</id>
    </interactant>
    <interactant intactId="EBI-10726187">
        <id>A0A0H3NA16</id>
        <label>sopB</label>
    </interactant>
    <organismsDiffer>true</organismsDiffer>
    <experiments>2</experiments>
</comment>
<comment type="interaction">
    <interactant intactId="EBI-81752">
        <id>P60953</id>
    </interactant>
    <interactant intactId="EBI-11167349">
        <id>O30916</id>
        <label>sopB</label>
    </interactant>
    <organismsDiffer>true</organismsDiffer>
    <experiments>5</experiments>
</comment>
<comment type="interaction">
    <interactant intactId="EBI-81752">
        <id>P60953</id>
    </interactant>
    <interactant intactId="EBI-602254">
        <id>O52623</id>
        <label>sopE</label>
    </interactant>
    <organismsDiffer>true</organismsDiffer>
    <experiments>2</experiments>
</comment>
<comment type="interaction">
    <interactant intactId="EBI-81752">
        <id>P60953</id>
    </interactant>
    <interactant intactId="EBI-6142604">
        <id>O08816</id>
        <label>Wasl</label>
    </interactant>
    <organismsDiffer>true</organismsDiffer>
    <experiments>2</experiments>
</comment>
<comment type="interaction">
    <interactant intactId="EBI-3625591">
        <id>P60953-1</id>
    </interactant>
    <interactant intactId="EBI-602041">
        <id>Q15811</id>
        <label>ITSN1</label>
    </interactant>
    <organismsDiffer>false</organismsDiffer>
    <experiments>2</experiments>
</comment>
<comment type="interaction">
    <interactant intactId="EBI-287394">
        <id>P60953-2</id>
    </interactant>
    <interactant intactId="EBI-602762">
        <id>Q07960</id>
        <label>ARHGAP1</label>
    </interactant>
    <organismsDiffer>false</organismsDiffer>
    <experiments>3</experiments>
</comment>
<comment type="interaction">
    <interactant intactId="EBI-287394">
        <id>P60953-2</id>
    </interactant>
    <interactant intactId="EBI-717515">
        <id>Q14155</id>
        <label>ARHGEF7</label>
    </interactant>
    <organismsDiffer>false</organismsDiffer>
    <experiments>3</experiments>
</comment>
<comment type="interaction">
    <interactant intactId="EBI-287394">
        <id>P60953-2</id>
    </interactant>
    <interactant intactId="EBI-525456">
        <id>Q9UQB8</id>
        <label>BAIAP2</label>
    </interactant>
    <organismsDiffer>false</organismsDiffer>
    <experiments>2</experiments>
</comment>
<comment type="interaction">
    <interactant intactId="EBI-287394">
        <id>P60953-2</id>
    </interactant>
    <interactant intactId="EBI-6174091">
        <id>Q9UQB8-4</id>
        <label>BAIAP2</label>
    </interactant>
    <organismsDiffer>false</organismsDiffer>
    <experiments>5</experiments>
</comment>
<comment type="interaction">
    <interactant intactId="EBI-287394">
        <id>P60953-2</id>
    </interactant>
    <interactant intactId="EBI-3389553">
        <id>O75914</id>
        <label>PAK3</label>
    </interactant>
    <organismsDiffer>false</organismsDiffer>
    <experiments>2</experiments>
</comment>
<comment type="interaction">
    <interactant intactId="EBI-287394">
        <id>P60953-2</id>
    </interactant>
    <interactant intactId="EBI-1046542">
        <id>Q8TCU6</id>
        <label>PREX1</label>
    </interactant>
    <organismsDiffer>false</organismsDiffer>
    <experiments>2</experiments>
</comment>
<comment type="interaction">
    <interactant intactId="EBI-287394">
        <id>P60953-2</id>
    </interactant>
    <interactant intactId="EBI-603457">
        <id>Q07912</id>
        <label>TNK2</label>
    </interactant>
    <organismsDiffer>false</organismsDiffer>
    <experiments>2</experiments>
</comment>
<comment type="interaction">
    <interactant intactId="EBI-287394">
        <id>P60953-2</id>
    </interactant>
    <interactant intactId="EBI-15794593">
        <id>Q9R8E4</id>
        <label>map</label>
    </interactant>
    <organismsDiffer>true</organismsDiffer>
    <experiments>5</experiments>
</comment>
<comment type="interaction">
    <interactant intactId="EBI-287394">
        <id>P60953-2</id>
    </interactant>
    <interactant intactId="EBI-602123">
        <id>Q64096</id>
        <label>Mcf2l</label>
    </interactant>
    <organismsDiffer>true</organismsDiffer>
    <experiments>4</experiments>
</comment>
<comment type="subcellular location">
    <subcellularLocation>
        <location evidence="29">Cell membrane</location>
        <topology evidence="46">Lipid-anchor</topology>
        <orientation evidence="46">Cytoplasmic side</orientation>
    </subcellularLocation>
    <subcellularLocation>
        <location evidence="17">Cytoplasm</location>
        <location evidence="17">Cytoskeleton</location>
        <location evidence="17">Microtubule organizing center</location>
        <location evidence="17">Centrosome</location>
    </subcellularLocation>
    <subcellularLocation>
        <location evidence="17">Cytoplasm</location>
        <location evidence="17">Cytoskeleton</location>
        <location evidence="17">Spindle</location>
    </subcellularLocation>
    <subcellularLocation>
        <location evidence="17">Midbody</location>
    </subcellularLocation>
    <subcellularLocation>
        <location evidence="2">Cell projection</location>
        <location evidence="2">Dendrite</location>
    </subcellularLocation>
    <text evidence="2 17 25">Localizes to spindle during prometaphase cells. Moves to the central spindle as cells progressed through anaphase to telophase (PubMed:15642749). Localizes at the end of cytokinesis in the intercellular bridge formed between two daughter cells (PubMed:15642749). Its localization is regulated by the activities of guanine nucleotide exchange factor ECT2 and GTPase activating protein RACGAP1 (PubMed:15642749). Colocalizes with NEK6 in the centrosome (PubMed:20873783). In its active GTP-bound form localizes to the leading edge membrane of migrating dendritic cells (By similarity).</text>
</comment>
<comment type="alternative products">
    <event type="alternative splicing"/>
    <isoform>
        <id>P60953-2</id>
        <id>P21181-4</id>
        <name>2</name>
        <name>Placental</name>
        <sequence type="displayed"/>
    </isoform>
    <isoform>
        <id>P60953-1</id>
        <id>P21181-1</id>
        <name>1</name>
        <name>Brain</name>
        <sequence type="described" ref="VSP_040583 VSP_040584"/>
    </isoform>
</comment>
<comment type="PTM">
    <text evidence="20 21 24">(Microbial infection) AMPylation at Tyr-32 and Thr-35 are mediated by bacterial enzymes in case of infection by H.somnus and V.parahaemolyticus, respectively. AMPylation occurs in the effector region and leads to inactivation of the GTPase activity by preventing the interaction with downstream effectors, thereby inhibiting actin assembly in infected cells. It is unclear whether some human enzyme mediates AMPylation; FICD has such ability in vitro but additional experiments remain to be done to confirm results in vivo.</text>
</comment>
<comment type="PTM">
    <text evidence="15">Phosphorylated by SRC in an EGF-dependent manner, this stimulates the binding of the Rho-GDP dissociation inhibitor RhoGDI.</text>
</comment>
<comment type="PTM">
    <text evidence="32">(Microbial infection) Glycosylated at Tyr-32 by Photorhabdus asymbiotica toxin PAU_02230. Mono-O-GlcNAcylation by PAU_02230 inhibits downstream signaling by an impaired interaction with diverse regulator and effector proteins of CDC42 and leads to actin disassembly.</text>
</comment>
<comment type="PTM">
    <text evidence="33 40 41">(Microbial infection) Glucosylated at Thr-35 by C.difficile toxins TcdA and TcdB in the colonic epithelium (PubMed:24905543, PubMed:7775453, PubMed:7777059). Monoglucosylation completely prevents the recognition of the downstream effector, blocking the GTPases in their inactive form, leading to actin cytoskeleton disruption and cell death, resulting in the loss of colonic epithelial barrier function (PubMed:7775453, PubMed:7777059).</text>
</comment>
<comment type="PTM">
    <text evidence="42">(Microbial infection) Glycosylated (O-GlcNAcylated) at Thr-35 by C.novyi toxin TcdA (PubMed:8810274). O-GlcNAcylation completely prevents the recognition of the downstream effector, blocking the GTPases in their inactive form, leading to actin cytoskeleton disruption (PubMed:8810274).</text>
</comment>
<comment type="disease" evidence="34 36">
    <disease id="DI-04631">
        <name>Takenouchi-Kosaki syndrome</name>
        <acronym>TKS</acronym>
        <description>An autosomal dominant syndrome characterized by macrothrombocytopenia, lymphedema, intellectual disability, developmental delay, and distinctive facial features.</description>
        <dbReference type="MIM" id="616737"/>
    </disease>
    <text>The disease is caused by variants affecting the gene represented in this entry.</text>
</comment>
<comment type="similarity">
    <text evidence="46">Belongs to the small GTPase superfamily. Rho family. CDC42 subfamily.</text>
</comment>
<comment type="online information" name="Atlas of Genetics and Cytogenetics in Oncology and Haematology">
    <link uri="https://atlasgeneticsoncology.org/gene/40012/CDC42"/>
</comment>
<sequence>MQTIKCVVVGDGAVGKTCLLISYTTNKFPSEYVPTVFDNYAVTVMIGGEPYTLGLFDTAGQEDYDRLRPLSYPQTDVFLVCFSVVSPSSFENVKEKWVPEITHHCPKTPFLLVGTQIDLRDDPSTIEKLAKNKQKPITPETAEKLARDLKAVKYVECSALTQKGLKNVFDEAILAALEPPEPKKSRRCVLL</sequence>
<gene>
    <name evidence="49" type="primary">CDC42</name>
</gene>
<dbReference type="EC" id="3.6.5.2" evidence="27 31"/>
<dbReference type="EMBL" id="M35543">
    <property type="protein sequence ID" value="AAA52494.1"/>
    <property type="molecule type" value="mRNA"/>
</dbReference>
<dbReference type="EMBL" id="M57298">
    <property type="protein sequence ID" value="AAA52592.1"/>
    <property type="molecule type" value="mRNA"/>
</dbReference>
<dbReference type="EMBL" id="AL121734">
    <property type="protein sequence ID" value="CAB57325.1"/>
    <property type="molecule type" value="mRNA"/>
</dbReference>
<dbReference type="EMBL" id="AL121735">
    <property type="protein sequence ID" value="CAB57326.1"/>
    <property type="molecule type" value="mRNA"/>
</dbReference>
<dbReference type="EMBL" id="AF498962">
    <property type="protein sequence ID" value="AAM21109.1"/>
    <property type="molecule type" value="mRNA"/>
</dbReference>
<dbReference type="EMBL" id="AF498963">
    <property type="protein sequence ID" value="AAM21110.1"/>
    <property type="molecule type" value="mRNA"/>
</dbReference>
<dbReference type="EMBL" id="AY673602">
    <property type="protein sequence ID" value="AAT70721.1"/>
    <property type="molecule type" value="Genomic_DNA"/>
</dbReference>
<dbReference type="EMBL" id="AL031281">
    <property type="status" value="NOT_ANNOTATED_CDS"/>
    <property type="molecule type" value="Genomic_DNA"/>
</dbReference>
<dbReference type="EMBL" id="BC002711">
    <property type="protein sequence ID" value="AAH02711.1"/>
    <property type="molecule type" value="mRNA"/>
</dbReference>
<dbReference type="EMBL" id="BC003682">
    <property type="protein sequence ID" value="AAH03682.1"/>
    <property type="molecule type" value="mRNA"/>
</dbReference>
<dbReference type="EMBL" id="BC018266">
    <property type="protein sequence ID" value="AAH18266.1"/>
    <property type="molecule type" value="mRNA"/>
</dbReference>
<dbReference type="CCDS" id="CCDS221.1"/>
<dbReference type="CCDS" id="CCDS222.1">
    <molecule id="P60953-1"/>
</dbReference>
<dbReference type="PIR" id="A36382">
    <property type="entry name" value="A36382"/>
</dbReference>
<dbReference type="PIR" id="A39265">
    <property type="entry name" value="A39265"/>
</dbReference>
<dbReference type="RefSeq" id="NP_001034891.1">
    <molecule id="P60953-2"/>
    <property type="nucleotide sequence ID" value="NM_001039802.2"/>
</dbReference>
<dbReference type="RefSeq" id="NP_001782.1">
    <molecule id="P60953-2"/>
    <property type="nucleotide sequence ID" value="NM_001791.4"/>
</dbReference>
<dbReference type="RefSeq" id="NP_426359.1">
    <molecule id="P60953-1"/>
    <property type="nucleotide sequence ID" value="NM_044472.3"/>
</dbReference>
<dbReference type="PDB" id="1A4R">
    <property type="method" value="X-ray"/>
    <property type="resolution" value="2.50 A"/>
    <property type="chains" value="A/B=1-191"/>
</dbReference>
<dbReference type="PDB" id="1AJE">
    <property type="method" value="NMR"/>
    <property type="chains" value="A=1-187"/>
</dbReference>
<dbReference type="PDB" id="1AM4">
    <property type="method" value="X-ray"/>
    <property type="resolution" value="2.70 A"/>
    <property type="chains" value="D/E/F=2-177"/>
</dbReference>
<dbReference type="PDB" id="1AN0">
    <property type="method" value="X-ray"/>
    <property type="resolution" value="2.80 A"/>
    <property type="chains" value="A/B=1-190"/>
</dbReference>
<dbReference type="PDB" id="1CEE">
    <property type="method" value="NMR"/>
    <property type="chains" value="A=1-179"/>
</dbReference>
<dbReference type="PDB" id="1CF4">
    <property type="method" value="NMR"/>
    <property type="chains" value="A=1-184"/>
</dbReference>
<dbReference type="PDB" id="1DOA">
    <property type="method" value="X-ray"/>
    <property type="resolution" value="2.60 A"/>
    <property type="chains" value="A=1-188"/>
</dbReference>
<dbReference type="PDB" id="1E0A">
    <property type="method" value="NMR"/>
    <property type="chains" value="A=1-184"/>
</dbReference>
<dbReference type="PDB" id="1EES">
    <property type="method" value="NMR"/>
    <property type="chains" value="A=1-178"/>
</dbReference>
<dbReference type="PDB" id="1GRN">
    <property type="method" value="X-ray"/>
    <property type="resolution" value="2.10 A"/>
    <property type="chains" value="A=1-191"/>
</dbReference>
<dbReference type="PDB" id="1GZS">
    <property type="method" value="X-ray"/>
    <property type="resolution" value="2.30 A"/>
    <property type="chains" value="A/C=1-178"/>
</dbReference>
<dbReference type="PDB" id="1KI1">
    <property type="method" value="X-ray"/>
    <property type="resolution" value="2.30 A"/>
    <property type="chains" value="A/C=1-188"/>
</dbReference>
<dbReference type="PDB" id="1KZ7">
    <property type="method" value="X-ray"/>
    <property type="resolution" value="2.40 A"/>
    <property type="chains" value="B/D=1-188"/>
</dbReference>
<dbReference type="PDB" id="1KZG">
    <property type="method" value="X-ray"/>
    <property type="resolution" value="2.60 A"/>
    <property type="chains" value="B/D=1-188"/>
</dbReference>
<dbReference type="PDB" id="1NF3">
    <property type="method" value="X-ray"/>
    <property type="resolution" value="2.10 A"/>
    <property type="chains" value="A/B=2-191"/>
</dbReference>
<dbReference type="PDB" id="2ASE">
    <property type="method" value="NMR"/>
    <property type="chains" value="A=1-178"/>
</dbReference>
<dbReference type="PDB" id="2DFK">
    <property type="method" value="X-ray"/>
    <property type="resolution" value="2.15 A"/>
    <property type="chains" value="B/D=1-191"/>
</dbReference>
<dbReference type="PDB" id="2KB0">
    <property type="method" value="NMR"/>
    <property type="chains" value="A=1-178"/>
</dbReference>
<dbReference type="PDB" id="2NGR">
    <property type="method" value="X-ray"/>
    <property type="resolution" value="1.90 A"/>
    <property type="chains" value="A=1-191"/>
</dbReference>
<dbReference type="PDB" id="2ODB">
    <property type="method" value="X-ray"/>
    <property type="resolution" value="2.40 A"/>
    <property type="chains" value="A=1-191"/>
</dbReference>
<dbReference type="PDB" id="2QRZ">
    <property type="method" value="X-ray"/>
    <property type="resolution" value="2.40 A"/>
    <property type="chains" value="A/B=1-189"/>
</dbReference>
<dbReference type="PDB" id="2WM9">
    <property type="method" value="X-ray"/>
    <property type="resolution" value="2.20 A"/>
    <property type="chains" value="B=1-188"/>
</dbReference>
<dbReference type="PDB" id="2WMN">
    <property type="method" value="X-ray"/>
    <property type="resolution" value="2.39 A"/>
    <property type="chains" value="B=1-188"/>
</dbReference>
<dbReference type="PDB" id="2WMO">
    <property type="method" value="X-ray"/>
    <property type="resolution" value="2.20 A"/>
    <property type="chains" value="B=1-188"/>
</dbReference>
<dbReference type="PDB" id="3GCG">
    <property type="method" value="X-ray"/>
    <property type="resolution" value="2.30 A"/>
    <property type="chains" value="A=2-178"/>
</dbReference>
<dbReference type="PDB" id="3QBV">
    <property type="method" value="X-ray"/>
    <property type="resolution" value="2.65 A"/>
    <property type="chains" value="A/C=1-178"/>
</dbReference>
<dbReference type="PDB" id="3VHL">
    <property type="method" value="X-ray"/>
    <property type="resolution" value="2.08 A"/>
    <property type="chains" value="B=1-188"/>
</dbReference>
<dbReference type="PDB" id="4DID">
    <property type="method" value="X-ray"/>
    <property type="resolution" value="2.35 A"/>
    <property type="chains" value="A=1-183"/>
</dbReference>
<dbReference type="PDB" id="4ITR">
    <property type="method" value="X-ray"/>
    <property type="resolution" value="2.30 A"/>
    <property type="chains" value="C/D=1-191"/>
</dbReference>
<dbReference type="PDB" id="4JS0">
    <property type="method" value="X-ray"/>
    <property type="resolution" value="1.90 A"/>
    <property type="chains" value="A=1-178"/>
</dbReference>
<dbReference type="PDB" id="4YC7">
    <property type="method" value="X-ray"/>
    <property type="resolution" value="2.50 A"/>
    <property type="chains" value="A=1-179"/>
</dbReference>
<dbReference type="PDB" id="4YDH">
    <property type="method" value="X-ray"/>
    <property type="resolution" value="3.80 A"/>
    <property type="chains" value="B/D=1-179"/>
</dbReference>
<dbReference type="PDB" id="5CJP">
    <property type="method" value="X-ray"/>
    <property type="resolution" value="2.60 A"/>
    <property type="chains" value="A/B/C/D=1-177"/>
</dbReference>
<dbReference type="PDB" id="5FI1">
    <property type="method" value="X-ray"/>
    <property type="resolution" value="3.20 A"/>
    <property type="chains" value="B=1-191"/>
</dbReference>
<dbReference type="PDB" id="5HZK">
    <property type="method" value="X-ray"/>
    <property type="resolution" value="3.30 A"/>
    <property type="chains" value="A/C=1-181"/>
</dbReference>
<dbReference type="PDB" id="5UPK">
    <property type="method" value="X-ray"/>
    <property type="resolution" value="2.40 A"/>
    <property type="chains" value="C=1-177"/>
</dbReference>
<dbReference type="PDB" id="5UPL">
    <property type="method" value="X-ray"/>
    <property type="resolution" value="3.00 A"/>
    <property type="chains" value="B=1-177"/>
</dbReference>
<dbReference type="PDB" id="6AJ4">
    <property type="method" value="X-ray"/>
    <property type="resolution" value="3.26 A"/>
    <property type="chains" value="B/D/F/H=1-188"/>
</dbReference>
<dbReference type="PDB" id="6AJL">
    <property type="method" value="X-ray"/>
    <property type="resolution" value="3.23 A"/>
    <property type="chains" value="B/D/F/H=1-188"/>
</dbReference>
<dbReference type="PDB" id="6SIU">
    <property type="method" value="X-ray"/>
    <property type="resolution" value="2.49 A"/>
    <property type="chains" value="C/D=1-191"/>
</dbReference>
<dbReference type="PDB" id="6SUP">
    <property type="method" value="X-ray"/>
    <property type="resolution" value="2.00 A"/>
    <property type="chains" value="A=167-179"/>
</dbReference>
<dbReference type="PDB" id="6TKY">
    <property type="method" value="X-ray"/>
    <property type="resolution" value="2.55 A"/>
    <property type="chains" value="C/D=1-188"/>
</dbReference>
<dbReference type="PDB" id="6TKZ">
    <property type="method" value="X-ray"/>
    <property type="resolution" value="2.64 A"/>
    <property type="chains" value="C/D=1-188"/>
</dbReference>
<dbReference type="PDB" id="7S0Y">
    <property type="method" value="X-ray"/>
    <property type="resolution" value="2.79 A"/>
    <property type="chains" value="B=4-179"/>
</dbReference>
<dbReference type="PDB" id="8I5F">
    <property type="method" value="X-ray"/>
    <property type="resolution" value="2.80 A"/>
    <property type="chains" value="C/D=1-188"/>
</dbReference>
<dbReference type="PDBsum" id="1A4R"/>
<dbReference type="PDBsum" id="1AJE"/>
<dbReference type="PDBsum" id="1AM4"/>
<dbReference type="PDBsum" id="1AN0"/>
<dbReference type="PDBsum" id="1CEE"/>
<dbReference type="PDBsum" id="1CF4"/>
<dbReference type="PDBsum" id="1DOA"/>
<dbReference type="PDBsum" id="1E0A"/>
<dbReference type="PDBsum" id="1EES"/>
<dbReference type="PDBsum" id="1GRN"/>
<dbReference type="PDBsum" id="1GZS"/>
<dbReference type="PDBsum" id="1KI1"/>
<dbReference type="PDBsum" id="1KZ7"/>
<dbReference type="PDBsum" id="1KZG"/>
<dbReference type="PDBsum" id="1NF3"/>
<dbReference type="PDBsum" id="2ASE"/>
<dbReference type="PDBsum" id="2DFK"/>
<dbReference type="PDBsum" id="2KB0"/>
<dbReference type="PDBsum" id="2NGR"/>
<dbReference type="PDBsum" id="2ODB"/>
<dbReference type="PDBsum" id="2QRZ"/>
<dbReference type="PDBsum" id="2WM9"/>
<dbReference type="PDBsum" id="2WMN"/>
<dbReference type="PDBsum" id="2WMO"/>
<dbReference type="PDBsum" id="3GCG"/>
<dbReference type="PDBsum" id="3QBV"/>
<dbReference type="PDBsum" id="3VHL"/>
<dbReference type="PDBsum" id="4DID"/>
<dbReference type="PDBsum" id="4ITR"/>
<dbReference type="PDBsum" id="4JS0"/>
<dbReference type="PDBsum" id="4YC7"/>
<dbReference type="PDBsum" id="4YDH"/>
<dbReference type="PDBsum" id="5CJP"/>
<dbReference type="PDBsum" id="5FI1"/>
<dbReference type="PDBsum" id="5HZK"/>
<dbReference type="PDBsum" id="5UPK"/>
<dbReference type="PDBsum" id="5UPL"/>
<dbReference type="PDBsum" id="6AJ4"/>
<dbReference type="PDBsum" id="6AJL"/>
<dbReference type="PDBsum" id="6SIU"/>
<dbReference type="PDBsum" id="6SUP"/>
<dbReference type="PDBsum" id="6TKY"/>
<dbReference type="PDBsum" id="6TKZ"/>
<dbReference type="PDBsum" id="7S0Y"/>
<dbReference type="PDBsum" id="8I5F"/>
<dbReference type="BMRB" id="P60953"/>
<dbReference type="EMDB" id="EMD-2504"/>
<dbReference type="SMR" id="P60953"/>
<dbReference type="BioGRID" id="107433">
    <property type="interactions" value="1318"/>
</dbReference>
<dbReference type="CORUM" id="P60953"/>
<dbReference type="DIP" id="DIP-31097N"/>
<dbReference type="ELM" id="P60953"/>
<dbReference type="FunCoup" id="P60953">
    <property type="interactions" value="3682"/>
</dbReference>
<dbReference type="IntAct" id="P60953">
    <property type="interactions" value="287"/>
</dbReference>
<dbReference type="MINT" id="P60953"/>
<dbReference type="STRING" id="9606.ENSP00000497733"/>
<dbReference type="BindingDB" id="P60953"/>
<dbReference type="ChEMBL" id="CHEMBL6088"/>
<dbReference type="DrugBank" id="DB02623">
    <property type="generic name" value="Aminophosphonic acid-guanylate ester"/>
</dbReference>
<dbReference type="DrugBank" id="DB04315">
    <property type="generic name" value="Guanosine-5'-Diphosphate"/>
</dbReference>
<dbReference type="MoonDB" id="P60953">
    <property type="type" value="Predicted"/>
</dbReference>
<dbReference type="GlyCosmos" id="P60953">
    <property type="glycosylation" value="2 sites, No reported glycans"/>
</dbReference>
<dbReference type="GlyGen" id="P60953">
    <property type="glycosylation" value="5 sites, 1 O-linked glycan (1 site)"/>
</dbReference>
<dbReference type="iPTMnet" id="P60953"/>
<dbReference type="PhosphoSitePlus" id="P60953"/>
<dbReference type="SwissPalm" id="P60953"/>
<dbReference type="BioMuta" id="CDC42"/>
<dbReference type="DMDM" id="322510015"/>
<dbReference type="CPTAC" id="CPTAC-1601"/>
<dbReference type="jPOST" id="P60953"/>
<dbReference type="MassIVE" id="P60953"/>
<dbReference type="PaxDb" id="9606-ENSP00000383118"/>
<dbReference type="PeptideAtlas" id="P60953"/>
<dbReference type="PRIDE" id="P60953"/>
<dbReference type="ProteomicsDB" id="57238"/>
<dbReference type="ProteomicsDB" id="57239">
    <molecule id="P60953-1"/>
</dbReference>
<dbReference type="Pumba" id="P60953"/>
<dbReference type="TopDownProteomics" id="P60953-2">
    <molecule id="P60953-2"/>
</dbReference>
<dbReference type="Antibodypedia" id="3818">
    <property type="antibodies" value="526 antibodies from 43 providers"/>
</dbReference>
<dbReference type="DNASU" id="998"/>
<dbReference type="Ensembl" id="ENST00000315554.15">
    <molecule id="P60953-1"/>
    <property type="protein sequence ID" value="ENSP00000314458.8"/>
    <property type="gene ID" value="ENSG00000070831.18"/>
</dbReference>
<dbReference type="Ensembl" id="ENST00000344548.8">
    <molecule id="P60953-2"/>
    <property type="protein sequence ID" value="ENSP00000341072.3"/>
    <property type="gene ID" value="ENSG00000070831.18"/>
</dbReference>
<dbReference type="Ensembl" id="ENST00000400259.5">
    <molecule id="P60953-2"/>
    <property type="protein sequence ID" value="ENSP00000383118.1"/>
    <property type="gene ID" value="ENSG00000070831.18"/>
</dbReference>
<dbReference type="Ensembl" id="ENST00000411827.2">
    <molecule id="P60953-2"/>
    <property type="protein sequence ID" value="ENSP00000398327.2"/>
    <property type="gene ID" value="ENSG00000070831.18"/>
</dbReference>
<dbReference type="Ensembl" id="ENST00000656825.1">
    <molecule id="P60953-2"/>
    <property type="protein sequence ID" value="ENSP00000499457.1"/>
    <property type="gene ID" value="ENSG00000070831.18"/>
</dbReference>
<dbReference type="Ensembl" id="ENST00000662562.2">
    <molecule id="P60953-2"/>
    <property type="protein sequence ID" value="ENSP00000499612.1"/>
    <property type="gene ID" value="ENSG00000070831.18"/>
</dbReference>
<dbReference type="Ensembl" id="ENST00000695796.1">
    <molecule id="P60953-2"/>
    <property type="protein sequence ID" value="ENSP00000512176.1"/>
    <property type="gene ID" value="ENSG00000070831.18"/>
</dbReference>
<dbReference type="Ensembl" id="ENST00000695797.1">
    <molecule id="P60953-2"/>
    <property type="protein sequence ID" value="ENSP00000512177.1"/>
    <property type="gene ID" value="ENSG00000070831.18"/>
</dbReference>
<dbReference type="Ensembl" id="ENST00000695798.1">
    <molecule id="P60953-2"/>
    <property type="protein sequence ID" value="ENSP00000512178.1"/>
    <property type="gene ID" value="ENSG00000070831.18"/>
</dbReference>
<dbReference type="Ensembl" id="ENST00000695799.1">
    <molecule id="P60953-2"/>
    <property type="protein sequence ID" value="ENSP00000512179.1"/>
    <property type="gene ID" value="ENSG00000070831.18"/>
</dbReference>
<dbReference type="Ensembl" id="ENST00000695800.1">
    <molecule id="P60953-2"/>
    <property type="protein sequence ID" value="ENSP00000512180.1"/>
    <property type="gene ID" value="ENSG00000070831.18"/>
</dbReference>
<dbReference type="Ensembl" id="ENST00000695802.1">
    <molecule id="P60953-2"/>
    <property type="protein sequence ID" value="ENSP00000512182.1"/>
    <property type="gene ID" value="ENSG00000070831.18"/>
</dbReference>
<dbReference type="Ensembl" id="ENST00000695857.1">
    <molecule id="P60953-1"/>
    <property type="protein sequence ID" value="ENSP00000512222.1"/>
    <property type="gene ID" value="ENSG00000070831.18"/>
</dbReference>
<dbReference type="Ensembl" id="ENST00000695860.1">
    <molecule id="P60953-1"/>
    <property type="protein sequence ID" value="ENSP00000512225.1"/>
    <property type="gene ID" value="ENSG00000070831.18"/>
</dbReference>
<dbReference type="GeneID" id="998"/>
<dbReference type="KEGG" id="hsa:998"/>
<dbReference type="MANE-Select" id="ENST00000656825.1">
    <property type="protein sequence ID" value="ENSP00000499457.1"/>
    <property type="RefSeq nucleotide sequence ID" value="NM_001791.4"/>
    <property type="RefSeq protein sequence ID" value="NP_001782.1"/>
</dbReference>
<dbReference type="UCSC" id="uc001bfp.4">
    <property type="organism name" value="human"/>
</dbReference>
<dbReference type="AGR" id="HGNC:1736"/>
<dbReference type="CTD" id="998"/>
<dbReference type="DisGeNET" id="998"/>
<dbReference type="GeneCards" id="CDC42"/>
<dbReference type="HGNC" id="HGNC:1736">
    <property type="gene designation" value="CDC42"/>
</dbReference>
<dbReference type="HPA" id="ENSG00000070831">
    <property type="expression patterns" value="Low tissue specificity"/>
</dbReference>
<dbReference type="MalaCards" id="CDC42"/>
<dbReference type="MIM" id="116952">
    <property type="type" value="gene"/>
</dbReference>
<dbReference type="MIM" id="616737">
    <property type="type" value="phenotype"/>
</dbReference>
<dbReference type="neXtProt" id="NX_P60953"/>
<dbReference type="OpenTargets" id="ENSG00000070831"/>
<dbReference type="Orphanet" id="619363">
    <property type="disease" value="NOCARH syndrome"/>
</dbReference>
<dbReference type="Orphanet" id="487796">
    <property type="disease" value="Takenouchi-Kosaki syndrome"/>
</dbReference>
<dbReference type="PharmGKB" id="PA26266"/>
<dbReference type="VEuPathDB" id="HostDB:ENSG00000070831"/>
<dbReference type="eggNOG" id="KOG0393">
    <property type="taxonomic scope" value="Eukaryota"/>
</dbReference>
<dbReference type="GeneTree" id="ENSGT00940000153675"/>
<dbReference type="HOGENOM" id="CLU_041217_21_3_1"/>
<dbReference type="InParanoid" id="P60953"/>
<dbReference type="OMA" id="GDEPYTF"/>
<dbReference type="OrthoDB" id="8830751at2759"/>
<dbReference type="PAN-GO" id="P60953">
    <property type="GO annotations" value="8 GO annotations based on evolutionary models"/>
</dbReference>
<dbReference type="PhylomeDB" id="P60953"/>
<dbReference type="TreeFam" id="TF101109"/>
<dbReference type="BRENDA" id="3.6.5.2">
    <property type="organism ID" value="2681"/>
</dbReference>
<dbReference type="PathwayCommons" id="P60953"/>
<dbReference type="Reactome" id="R-HSA-114604">
    <property type="pathway name" value="GPVI-mediated activation cascade"/>
</dbReference>
<dbReference type="Reactome" id="R-HSA-182971">
    <property type="pathway name" value="EGFR downregulation"/>
</dbReference>
<dbReference type="Reactome" id="R-HSA-2029482">
    <property type="pathway name" value="Regulation of actin dynamics for phagocytic cup formation"/>
</dbReference>
<dbReference type="Reactome" id="R-HSA-389359">
    <property type="pathway name" value="CD28 dependent Vav1 pathway"/>
</dbReference>
<dbReference type="Reactome" id="R-HSA-3928662">
    <property type="pathway name" value="EPHB-mediated forward signaling"/>
</dbReference>
<dbReference type="Reactome" id="R-HSA-418885">
    <property type="pathway name" value="DCC mediated attractive signaling"/>
</dbReference>
<dbReference type="Reactome" id="R-HSA-428543">
    <property type="pathway name" value="Inactivation of CDC42 and RAC1"/>
</dbReference>
<dbReference type="Reactome" id="R-HSA-4420097">
    <property type="pathway name" value="VEGFA-VEGFR2 Pathway"/>
</dbReference>
<dbReference type="Reactome" id="R-HSA-525793">
    <property type="pathway name" value="Myogenesis"/>
</dbReference>
<dbReference type="Reactome" id="R-HSA-5625970">
    <property type="pathway name" value="RHO GTPases activate KTN1"/>
</dbReference>
<dbReference type="Reactome" id="R-HSA-5626467">
    <property type="pathway name" value="RHO GTPases activate IQGAPs"/>
</dbReference>
<dbReference type="Reactome" id="R-HSA-5627123">
    <property type="pathway name" value="RHO GTPases activate PAKs"/>
</dbReference>
<dbReference type="Reactome" id="R-HSA-5663213">
    <property type="pathway name" value="RHO GTPases Activate WASPs and WAVEs"/>
</dbReference>
<dbReference type="Reactome" id="R-HSA-5663220">
    <property type="pathway name" value="RHO GTPases Activate Formins"/>
</dbReference>
<dbReference type="Reactome" id="R-HSA-5687128">
    <property type="pathway name" value="MAPK6/MAPK4 signaling"/>
</dbReference>
<dbReference type="Reactome" id="R-HSA-8950505">
    <property type="pathway name" value="Gene and protein expression by JAK-STAT signaling after Interleukin-12 stimulation"/>
</dbReference>
<dbReference type="Reactome" id="R-HSA-8964616">
    <property type="pathway name" value="G beta:gamma signalling through CDC42"/>
</dbReference>
<dbReference type="Reactome" id="R-HSA-9013148">
    <property type="pathway name" value="CDC42 GTPase cycle"/>
</dbReference>
<dbReference type="Reactome" id="R-HSA-9013149">
    <property type="pathway name" value="RAC1 GTPase cycle"/>
</dbReference>
<dbReference type="Reactome" id="R-HSA-9013404">
    <property type="pathway name" value="RAC2 GTPase cycle"/>
</dbReference>
<dbReference type="Reactome" id="R-HSA-9013406">
    <property type="pathway name" value="RHOQ GTPase cycle"/>
</dbReference>
<dbReference type="Reactome" id="R-HSA-9013408">
    <property type="pathway name" value="RHOG GTPase cycle"/>
</dbReference>
<dbReference type="Reactome" id="R-HSA-9013409">
    <property type="pathway name" value="RHOJ GTPase cycle"/>
</dbReference>
<dbReference type="Reactome" id="R-HSA-9013420">
    <property type="pathway name" value="RHOU GTPase cycle"/>
</dbReference>
<dbReference type="Reactome" id="R-HSA-9013423">
    <property type="pathway name" value="RAC3 GTPase cycle"/>
</dbReference>
<dbReference type="Reactome" id="R-HSA-9013424">
    <property type="pathway name" value="RHOV GTPase cycle"/>
</dbReference>
<dbReference type="Reactome" id="R-HSA-9664422">
    <property type="pathway name" value="FCGR3A-mediated phagocytosis"/>
</dbReference>
<dbReference type="Reactome" id="R-HSA-983231">
    <property type="pathway name" value="Factors involved in megakaryocyte development and platelet production"/>
</dbReference>
<dbReference type="SignaLink" id="P60953"/>
<dbReference type="SIGNOR" id="P60953"/>
<dbReference type="BioGRID-ORCS" id="998">
    <property type="hits" value="675 hits in 1108 CRISPR screens"/>
</dbReference>
<dbReference type="CD-CODE" id="FB4E32DD">
    <property type="entry name" value="Presynaptic clusters and postsynaptic densities"/>
</dbReference>
<dbReference type="ChiTaRS" id="CDC42">
    <property type="organism name" value="human"/>
</dbReference>
<dbReference type="EvolutionaryTrace" id="P60953"/>
<dbReference type="GeneWiki" id="CDC42"/>
<dbReference type="GenomeRNAi" id="998"/>
<dbReference type="Pharos" id="P60953">
    <property type="development level" value="Tchem"/>
</dbReference>
<dbReference type="PRO" id="PR:P60953"/>
<dbReference type="Proteomes" id="UP000005640">
    <property type="component" value="Chromosome 1"/>
</dbReference>
<dbReference type="RNAct" id="P60953">
    <property type="molecule type" value="protein"/>
</dbReference>
<dbReference type="Bgee" id="ENSG00000070831">
    <property type="expression patterns" value="Expressed in cortical plate and 204 other cell types or tissues"/>
</dbReference>
<dbReference type="ExpressionAtlas" id="P60953">
    <property type="expression patterns" value="baseline and differential"/>
</dbReference>
<dbReference type="GO" id="GO:0045177">
    <property type="term" value="C:apical part of cell"/>
    <property type="evidence" value="ECO:0007669"/>
    <property type="project" value="Ensembl"/>
</dbReference>
<dbReference type="GO" id="GO:0005911">
    <property type="term" value="C:cell-cell junction"/>
    <property type="evidence" value="ECO:0007669"/>
    <property type="project" value="Ensembl"/>
</dbReference>
<dbReference type="GO" id="GO:0005813">
    <property type="term" value="C:centrosome"/>
    <property type="evidence" value="ECO:0007669"/>
    <property type="project" value="UniProtKB-SubCell"/>
</dbReference>
<dbReference type="GO" id="GO:0005737">
    <property type="term" value="C:cytoplasm"/>
    <property type="evidence" value="ECO:0000314"/>
    <property type="project" value="UniProtKB"/>
</dbReference>
<dbReference type="GO" id="GO:0036464">
    <property type="term" value="C:cytoplasmic ribonucleoprotein granule"/>
    <property type="evidence" value="ECO:0000314"/>
    <property type="project" value="ParkinsonsUK-UCL"/>
</dbReference>
<dbReference type="GO" id="GO:0005829">
    <property type="term" value="C:cytosol"/>
    <property type="evidence" value="ECO:0000304"/>
    <property type="project" value="Reactome"/>
</dbReference>
<dbReference type="GO" id="GO:0030425">
    <property type="term" value="C:dendrite"/>
    <property type="evidence" value="ECO:0007669"/>
    <property type="project" value="UniProtKB-SubCell"/>
</dbReference>
<dbReference type="GO" id="GO:0005789">
    <property type="term" value="C:endoplasmic reticulum membrane"/>
    <property type="evidence" value="ECO:0000304"/>
    <property type="project" value="Reactome"/>
</dbReference>
<dbReference type="GO" id="GO:0070062">
    <property type="term" value="C:extracellular exosome"/>
    <property type="evidence" value="ECO:0007005"/>
    <property type="project" value="UniProtKB"/>
</dbReference>
<dbReference type="GO" id="GO:0030175">
    <property type="term" value="C:filopodium"/>
    <property type="evidence" value="ECO:0000314"/>
    <property type="project" value="UniProtKB"/>
</dbReference>
<dbReference type="GO" id="GO:0005925">
    <property type="term" value="C:focal adhesion"/>
    <property type="evidence" value="ECO:0007005"/>
    <property type="project" value="UniProtKB"/>
</dbReference>
<dbReference type="GO" id="GO:0098978">
    <property type="term" value="C:glutamatergic synapse"/>
    <property type="evidence" value="ECO:0007669"/>
    <property type="project" value="Ensembl"/>
</dbReference>
<dbReference type="GO" id="GO:0000139">
    <property type="term" value="C:Golgi membrane"/>
    <property type="evidence" value="ECO:0000250"/>
    <property type="project" value="BHF-UCL"/>
</dbReference>
<dbReference type="GO" id="GO:0017119">
    <property type="term" value="C:Golgi transport complex"/>
    <property type="evidence" value="ECO:0000315"/>
    <property type="project" value="CAFA"/>
</dbReference>
<dbReference type="GO" id="GO:0031256">
    <property type="term" value="C:leading edge membrane"/>
    <property type="evidence" value="ECO:0007669"/>
    <property type="project" value="Ensembl"/>
</dbReference>
<dbReference type="GO" id="GO:0016020">
    <property type="term" value="C:membrane"/>
    <property type="evidence" value="ECO:0000314"/>
    <property type="project" value="UniProtKB"/>
</dbReference>
<dbReference type="GO" id="GO:0030496">
    <property type="term" value="C:midbody"/>
    <property type="evidence" value="ECO:0000314"/>
    <property type="project" value="UniProtKB"/>
</dbReference>
<dbReference type="GO" id="GO:0072686">
    <property type="term" value="C:mitotic spindle"/>
    <property type="evidence" value="ECO:0000314"/>
    <property type="project" value="UniProtKB"/>
</dbReference>
<dbReference type="GO" id="GO:0043005">
    <property type="term" value="C:neuron projection"/>
    <property type="evidence" value="ECO:0000314"/>
    <property type="project" value="BHF-UCL"/>
</dbReference>
<dbReference type="GO" id="GO:0043025">
    <property type="term" value="C:neuronal cell body"/>
    <property type="evidence" value="ECO:0000314"/>
    <property type="project" value="BHF-UCL"/>
</dbReference>
<dbReference type="GO" id="GO:0045335">
    <property type="term" value="C:phagocytic vesicle"/>
    <property type="evidence" value="ECO:0007669"/>
    <property type="project" value="Ensembl"/>
</dbReference>
<dbReference type="GO" id="GO:0005886">
    <property type="term" value="C:plasma membrane"/>
    <property type="evidence" value="ECO:0000314"/>
    <property type="project" value="UniProtKB"/>
</dbReference>
<dbReference type="GO" id="GO:0098794">
    <property type="term" value="C:postsynapse"/>
    <property type="evidence" value="ECO:0007669"/>
    <property type="project" value="Ensembl"/>
</dbReference>
<dbReference type="GO" id="GO:0032991">
    <property type="term" value="C:protein-containing complex"/>
    <property type="evidence" value="ECO:0000314"/>
    <property type="project" value="UniProtKB"/>
</dbReference>
<dbReference type="GO" id="GO:0051233">
    <property type="term" value="C:spindle midzone"/>
    <property type="evidence" value="ECO:0000314"/>
    <property type="project" value="UniProtKB"/>
</dbReference>
<dbReference type="GO" id="GO:0000322">
    <property type="term" value="C:storage vacuole"/>
    <property type="evidence" value="ECO:0007669"/>
    <property type="project" value="Ensembl"/>
</dbReference>
<dbReference type="GO" id="GO:0034191">
    <property type="term" value="F:apolipoprotein A-I receptor binding"/>
    <property type="evidence" value="ECO:0000353"/>
    <property type="project" value="BHF-UCL"/>
</dbReference>
<dbReference type="GO" id="GO:0003925">
    <property type="term" value="F:G protein activity"/>
    <property type="evidence" value="ECO:0007669"/>
    <property type="project" value="UniProtKB-EC"/>
</dbReference>
<dbReference type="GO" id="GO:0032427">
    <property type="term" value="F:GBD domain binding"/>
    <property type="evidence" value="ECO:0000353"/>
    <property type="project" value="CAFA"/>
</dbReference>
<dbReference type="GO" id="GO:0005525">
    <property type="term" value="F:GTP binding"/>
    <property type="evidence" value="ECO:0000314"/>
    <property type="project" value="UniProtKB"/>
</dbReference>
<dbReference type="GO" id="GO:0030742">
    <property type="term" value="F:GTP-dependent protein binding"/>
    <property type="evidence" value="ECO:0007669"/>
    <property type="project" value="Ensembl"/>
</dbReference>
<dbReference type="GO" id="GO:0003924">
    <property type="term" value="F:GTPase activity"/>
    <property type="evidence" value="ECO:0000314"/>
    <property type="project" value="UniProtKB"/>
</dbReference>
<dbReference type="GO" id="GO:0042802">
    <property type="term" value="F:identical protein binding"/>
    <property type="evidence" value="ECO:0000353"/>
    <property type="project" value="IntAct"/>
</dbReference>
<dbReference type="GO" id="GO:0019901">
    <property type="term" value="F:protein kinase binding"/>
    <property type="evidence" value="ECO:0000314"/>
    <property type="project" value="BHF-UCL"/>
</dbReference>
<dbReference type="GO" id="GO:0031996">
    <property type="term" value="F:thioesterase binding"/>
    <property type="evidence" value="ECO:0000353"/>
    <property type="project" value="UniProtKB"/>
</dbReference>
<dbReference type="GO" id="GO:0061630">
    <property type="term" value="F:ubiquitin protein ligase activity"/>
    <property type="evidence" value="ECO:0000314"/>
    <property type="project" value="AgBase"/>
</dbReference>
<dbReference type="GO" id="GO:0030036">
    <property type="term" value="P:actin cytoskeleton organization"/>
    <property type="evidence" value="ECO:0000314"/>
    <property type="project" value="UniProtKB"/>
</dbReference>
<dbReference type="GO" id="GO:0007015">
    <property type="term" value="P:actin filament organization"/>
    <property type="evidence" value="ECO:0000315"/>
    <property type="project" value="UniProtKB"/>
</dbReference>
<dbReference type="GO" id="GO:0034332">
    <property type="term" value="P:adherens junction organization"/>
    <property type="evidence" value="ECO:0007669"/>
    <property type="project" value="Ensembl"/>
</dbReference>
<dbReference type="GO" id="GO:0003161">
    <property type="term" value="P:cardiac conduction system development"/>
    <property type="evidence" value="ECO:0007669"/>
    <property type="project" value="Ensembl"/>
</dbReference>
<dbReference type="GO" id="GO:0003253">
    <property type="term" value="P:cardiac neural crest cell migration involved in outflow tract morphogenesis"/>
    <property type="evidence" value="ECO:0007669"/>
    <property type="project" value="Ensembl"/>
</dbReference>
<dbReference type="GO" id="GO:0034329">
    <property type="term" value="P:cell junction assembly"/>
    <property type="evidence" value="ECO:0000315"/>
    <property type="project" value="UniProtKB"/>
</dbReference>
<dbReference type="GO" id="GO:0071346">
    <property type="term" value="P:cellular response to type II interferon"/>
    <property type="evidence" value="ECO:0007669"/>
    <property type="project" value="Ensembl"/>
</dbReference>
<dbReference type="GO" id="GO:0036336">
    <property type="term" value="P:dendritic cell migration"/>
    <property type="evidence" value="ECO:0007669"/>
    <property type="project" value="Ensembl"/>
</dbReference>
<dbReference type="GO" id="GO:0060997">
    <property type="term" value="P:dendritic spine morphogenesis"/>
    <property type="evidence" value="ECO:0000250"/>
    <property type="project" value="UniProtKB"/>
</dbReference>
<dbReference type="GO" id="GO:0035050">
    <property type="term" value="P:embryonic heart tube development"/>
    <property type="evidence" value="ECO:0007669"/>
    <property type="project" value="Ensembl"/>
</dbReference>
<dbReference type="GO" id="GO:0006897">
    <property type="term" value="P:endocytosis"/>
    <property type="evidence" value="ECO:0000318"/>
    <property type="project" value="GO_Central"/>
</dbReference>
<dbReference type="GO" id="GO:0086101">
    <property type="term" value="P:endothelin receptor signaling pathway involved in heart process"/>
    <property type="evidence" value="ECO:0007669"/>
    <property type="project" value="Ensembl"/>
</dbReference>
<dbReference type="GO" id="GO:0030010">
    <property type="term" value="P:establishment of cell polarity"/>
    <property type="evidence" value="ECO:0000318"/>
    <property type="project" value="GO_Central"/>
</dbReference>
<dbReference type="GO" id="GO:0045198">
    <property type="term" value="P:establishment of epithelial cell apical/basal polarity"/>
    <property type="evidence" value="ECO:0000315"/>
    <property type="project" value="UniProtKB"/>
</dbReference>
<dbReference type="GO" id="GO:0051683">
    <property type="term" value="P:establishment of Golgi localization"/>
    <property type="evidence" value="ECO:0000250"/>
    <property type="project" value="BHF-UCL"/>
</dbReference>
<dbReference type="GO" id="GO:0007163">
    <property type="term" value="P:establishment or maintenance of cell polarity"/>
    <property type="evidence" value="ECO:0000304"/>
    <property type="project" value="UniProtKB"/>
</dbReference>
<dbReference type="GO" id="GO:0046847">
    <property type="term" value="P:filopodium assembly"/>
    <property type="evidence" value="ECO:0007669"/>
    <property type="project" value="Ensembl"/>
</dbReference>
<dbReference type="GO" id="GO:0007030">
    <property type="term" value="P:Golgi organization"/>
    <property type="evidence" value="ECO:0000250"/>
    <property type="project" value="BHF-UCL"/>
</dbReference>
<dbReference type="GO" id="GO:0060047">
    <property type="term" value="P:heart contraction"/>
    <property type="evidence" value="ECO:0007669"/>
    <property type="project" value="Ensembl"/>
</dbReference>
<dbReference type="GO" id="GO:0007229">
    <property type="term" value="P:integrin-mediated signaling pathway"/>
    <property type="evidence" value="ECO:0000315"/>
    <property type="project" value="BHF-UCL"/>
</dbReference>
<dbReference type="GO" id="GO:0030225">
    <property type="term" value="P:macrophage differentiation"/>
    <property type="evidence" value="ECO:0000304"/>
    <property type="project" value="UniProtKB"/>
</dbReference>
<dbReference type="GO" id="GO:0044788">
    <property type="term" value="P:modulation by host of viral process"/>
    <property type="evidence" value="ECO:0000315"/>
    <property type="project" value="ParkinsonsUK-UCL"/>
</dbReference>
<dbReference type="GO" id="GO:0031333">
    <property type="term" value="P:negative regulation of protein-containing complex assembly"/>
    <property type="evidence" value="ECO:0000353"/>
    <property type="project" value="UniProtKB"/>
</dbReference>
<dbReference type="GO" id="GO:0048664">
    <property type="term" value="P:neuron fate determination"/>
    <property type="evidence" value="ECO:0007669"/>
    <property type="project" value="Ensembl"/>
</dbReference>
<dbReference type="GO" id="GO:0038189">
    <property type="term" value="P:neuropilin signaling pathway"/>
    <property type="evidence" value="ECO:0000315"/>
    <property type="project" value="BHF-UCL"/>
</dbReference>
<dbReference type="GO" id="GO:0007097">
    <property type="term" value="P:nuclear migration"/>
    <property type="evidence" value="ECO:0007669"/>
    <property type="project" value="Ensembl"/>
</dbReference>
<dbReference type="GO" id="GO:0072384">
    <property type="term" value="P:organelle transport along microtubule"/>
    <property type="evidence" value="ECO:0000250"/>
    <property type="project" value="BHF-UCL"/>
</dbReference>
<dbReference type="GO" id="GO:0006911">
    <property type="term" value="P:phagocytosis, engulfment"/>
    <property type="evidence" value="ECO:0000315"/>
    <property type="project" value="UniProtKB"/>
</dbReference>
<dbReference type="GO" id="GO:0030307">
    <property type="term" value="P:positive regulation of cell growth"/>
    <property type="evidence" value="ECO:0000315"/>
    <property type="project" value="AgBase"/>
</dbReference>
<dbReference type="GO" id="GO:0030335">
    <property type="term" value="P:positive regulation of cell migration"/>
    <property type="evidence" value="ECO:0000315"/>
    <property type="project" value="BHF-UCL"/>
</dbReference>
<dbReference type="GO" id="GO:0032467">
    <property type="term" value="P:positive regulation of cytokinesis"/>
    <property type="evidence" value="ECO:0000315"/>
    <property type="project" value="UniProtKB"/>
</dbReference>
<dbReference type="GO" id="GO:0060501">
    <property type="term" value="P:positive regulation of epithelial cell proliferation involved in lung morphogenesis"/>
    <property type="evidence" value="ECO:0007669"/>
    <property type="project" value="Ensembl"/>
</dbReference>
<dbReference type="GO" id="GO:0051491">
    <property type="term" value="P:positive regulation of filopodium assembly"/>
    <property type="evidence" value="ECO:0000315"/>
    <property type="project" value="BHF-UCL"/>
</dbReference>
<dbReference type="GO" id="GO:0010592">
    <property type="term" value="P:positive regulation of lamellipodium assembly"/>
    <property type="evidence" value="ECO:0000315"/>
    <property type="project" value="CAFA"/>
</dbReference>
<dbReference type="GO" id="GO:0043410">
    <property type="term" value="P:positive regulation of MAPK cascade"/>
    <property type="evidence" value="ECO:0007669"/>
    <property type="project" value="Ensembl"/>
</dbReference>
<dbReference type="GO" id="GO:0051897">
    <property type="term" value="P:positive regulation of phosphatidylinositol 3-kinase/protein kinase B signal transduction"/>
    <property type="evidence" value="ECO:0007669"/>
    <property type="project" value="Ensembl"/>
</dbReference>
<dbReference type="GO" id="GO:0048549">
    <property type="term" value="P:positive regulation of pinocytosis"/>
    <property type="evidence" value="ECO:0000250"/>
    <property type="project" value="UniProtKB"/>
</dbReference>
<dbReference type="GO" id="GO:0031274">
    <property type="term" value="P:positive regulation of pseudopodium assembly"/>
    <property type="evidence" value="ECO:0000314"/>
    <property type="project" value="UniProtKB"/>
</dbReference>
<dbReference type="GO" id="GO:0051496">
    <property type="term" value="P:positive regulation of stress fiber assembly"/>
    <property type="evidence" value="ECO:0000315"/>
    <property type="project" value="BHF-UCL"/>
</dbReference>
<dbReference type="GO" id="GO:1900026">
    <property type="term" value="P:positive regulation of substrate adhesion-dependent cell spreading"/>
    <property type="evidence" value="ECO:0000314"/>
    <property type="project" value="UniProtKB"/>
</dbReference>
<dbReference type="GO" id="GO:0008104">
    <property type="term" value="P:protein localization"/>
    <property type="evidence" value="ECO:0007669"/>
    <property type="project" value="Ensembl"/>
</dbReference>
<dbReference type="GO" id="GO:0032956">
    <property type="term" value="P:regulation of actin cytoskeleton organization"/>
    <property type="evidence" value="ECO:0000315"/>
    <property type="project" value="BHF-UCL"/>
</dbReference>
<dbReference type="GO" id="GO:0051988">
    <property type="term" value="P:regulation of attachment of spindle microtubules to kinetochore"/>
    <property type="evidence" value="ECO:0000315"/>
    <property type="project" value="UniProtKB"/>
</dbReference>
<dbReference type="GO" id="GO:0051489">
    <property type="term" value="P:regulation of filopodium assembly"/>
    <property type="evidence" value="ECO:0000314"/>
    <property type="project" value="UniProtKB"/>
</dbReference>
<dbReference type="GO" id="GO:0010591">
    <property type="term" value="P:regulation of lamellipodium assembly"/>
    <property type="evidence" value="ECO:0000316"/>
    <property type="project" value="CAFA"/>
</dbReference>
<dbReference type="GO" id="GO:0007088">
    <property type="term" value="P:regulation of mitotic nuclear division"/>
    <property type="evidence" value="ECO:0007669"/>
    <property type="project" value="Ensembl"/>
</dbReference>
<dbReference type="GO" id="GO:0099175">
    <property type="term" value="P:regulation of postsynapse organization"/>
    <property type="evidence" value="ECO:0007669"/>
    <property type="project" value="Ensembl"/>
</dbReference>
<dbReference type="GO" id="GO:0051492">
    <property type="term" value="P:regulation of stress fiber assembly"/>
    <property type="evidence" value="ECO:0000316"/>
    <property type="project" value="CAFA"/>
</dbReference>
<dbReference type="GO" id="GO:0007165">
    <property type="term" value="P:signal transduction"/>
    <property type="evidence" value="ECO:0000318"/>
    <property type="project" value="GO_Central"/>
</dbReference>
<dbReference type="GO" id="GO:0007264">
    <property type="term" value="P:small GTPase-mediated signal transduction"/>
    <property type="evidence" value="ECO:0007669"/>
    <property type="project" value="InterPro"/>
</dbReference>
<dbReference type="GO" id="GO:0021762">
    <property type="term" value="P:substantia nigra development"/>
    <property type="evidence" value="ECO:0007007"/>
    <property type="project" value="UniProtKB"/>
</dbReference>
<dbReference type="GO" id="GO:0060071">
    <property type="term" value="P:Wnt signaling pathway, planar cell polarity pathway"/>
    <property type="evidence" value="ECO:0000303"/>
    <property type="project" value="ParkinsonsUK-UCL"/>
</dbReference>
<dbReference type="CDD" id="cd01874">
    <property type="entry name" value="Cdc42"/>
    <property type="match status" value="1"/>
</dbReference>
<dbReference type="FunFam" id="3.40.50.300:FF:000167">
    <property type="entry name" value="Cell division control protein 42 homolog"/>
    <property type="match status" value="1"/>
</dbReference>
<dbReference type="Gene3D" id="3.40.50.300">
    <property type="entry name" value="P-loop containing nucleotide triphosphate hydrolases"/>
    <property type="match status" value="1"/>
</dbReference>
<dbReference type="IDEAL" id="IID00308"/>
<dbReference type="InterPro" id="IPR037874">
    <property type="entry name" value="Cdc42"/>
</dbReference>
<dbReference type="InterPro" id="IPR027417">
    <property type="entry name" value="P-loop_NTPase"/>
</dbReference>
<dbReference type="InterPro" id="IPR005225">
    <property type="entry name" value="Small_GTP-bd"/>
</dbReference>
<dbReference type="InterPro" id="IPR001806">
    <property type="entry name" value="Small_GTPase"/>
</dbReference>
<dbReference type="InterPro" id="IPR003578">
    <property type="entry name" value="Small_GTPase_Rho"/>
</dbReference>
<dbReference type="NCBIfam" id="TIGR00231">
    <property type="entry name" value="small_GTP"/>
    <property type="match status" value="1"/>
</dbReference>
<dbReference type="PANTHER" id="PTHR24072">
    <property type="entry name" value="RHO FAMILY GTPASE"/>
    <property type="match status" value="1"/>
</dbReference>
<dbReference type="Pfam" id="PF00071">
    <property type="entry name" value="Ras"/>
    <property type="match status" value="1"/>
</dbReference>
<dbReference type="PRINTS" id="PR00449">
    <property type="entry name" value="RASTRNSFRMNG"/>
</dbReference>
<dbReference type="SMART" id="SM00175">
    <property type="entry name" value="RAB"/>
    <property type="match status" value="1"/>
</dbReference>
<dbReference type="SMART" id="SM00173">
    <property type="entry name" value="RAS"/>
    <property type="match status" value="1"/>
</dbReference>
<dbReference type="SMART" id="SM00174">
    <property type="entry name" value="RHO"/>
    <property type="match status" value="1"/>
</dbReference>
<dbReference type="SUPFAM" id="SSF52540">
    <property type="entry name" value="P-loop containing nucleoside triphosphate hydrolases"/>
    <property type="match status" value="1"/>
</dbReference>
<dbReference type="PROSITE" id="PS51420">
    <property type="entry name" value="RHO"/>
    <property type="match status" value="1"/>
</dbReference>
<name>CDC42_HUMAN</name>
<reference key="1">
    <citation type="journal article" date="1990" name="Mol. Cell. Biol.">
        <title>Molecular cloning and expression of a G25K cDNA, the human homolog of the yeast cell cycle gene CDC42.</title>
        <authorList>
            <person name="Munemitsu S."/>
            <person name="Innis M.A."/>
            <person name="Clark R."/>
            <person name="McCormick F."/>
            <person name="Ullrich A."/>
            <person name="Polakis P."/>
        </authorList>
    </citation>
    <scope>NUCLEOTIDE SEQUENCE [MRNA] (ISOFORM 1)</scope>
    <source>
        <tissue>Fetal brain</tissue>
    </source>
</reference>
<reference key="2">
    <citation type="journal article" date="1990" name="Proc. Natl. Acad. Sci. U.S.A.">
        <title>Molecular cloning of the gene for the human placental GTP-binding protein Gp (G25K): identification of this GTP-binding protein as the human homolog of the yeast cell-division-cycle protein CDC42.</title>
        <authorList>
            <person name="Shinjo K."/>
            <person name="Koland J.G."/>
            <person name="Hart M.J."/>
            <person name="Narasimhan V."/>
            <person name="Johnson D.I."/>
            <person name="Evans T."/>
            <person name="Cerione R.A."/>
        </authorList>
    </citation>
    <scope>NUCLEOTIDE SEQUENCE [MRNA] (ISOFORM 2)</scope>
    <source>
        <tissue>Placenta</tissue>
    </source>
</reference>
<reference key="3">
    <citation type="submission" date="1999-10" db="EMBL/GenBank/DDBJ databases">
        <authorList>
            <person name="Rhodes S."/>
            <person name="Huckle E."/>
        </authorList>
    </citation>
    <scope>NUCLEOTIDE SEQUENCE [LARGE SCALE MRNA] (ISOFORMS 1 AND 2)</scope>
</reference>
<reference key="4">
    <citation type="submission" date="2002-04" db="EMBL/GenBank/DDBJ databases">
        <title>cDNA clones of human proteins involved in signal transduction sequenced by the Guthrie cDNA resource center (www.cdna.org).</title>
        <authorList>
            <person name="Puhl H.L. III"/>
            <person name="Ikeda S.R."/>
            <person name="Aronstam R.S."/>
        </authorList>
    </citation>
    <scope>NUCLEOTIDE SEQUENCE [LARGE SCALE MRNA] (ISOFORMS 1 AND 2)</scope>
    <source>
        <tissue>Brain</tissue>
        <tissue>Placenta</tissue>
    </source>
</reference>
<reference key="5">
    <citation type="submission" date="2004-06" db="EMBL/GenBank/DDBJ databases">
        <authorList>
            <consortium name="NIEHS SNPs program"/>
        </authorList>
    </citation>
    <scope>NUCLEOTIDE SEQUENCE [GENOMIC DNA]</scope>
</reference>
<reference key="6">
    <citation type="journal article" date="2006" name="Nature">
        <title>The DNA sequence and biological annotation of human chromosome 1.</title>
        <authorList>
            <person name="Gregory S.G."/>
            <person name="Barlow K.F."/>
            <person name="McLay K.E."/>
            <person name="Kaul R."/>
            <person name="Swarbreck D."/>
            <person name="Dunham A."/>
            <person name="Scott C.E."/>
            <person name="Howe K.L."/>
            <person name="Woodfine K."/>
            <person name="Spencer C.C.A."/>
            <person name="Jones M.C."/>
            <person name="Gillson C."/>
            <person name="Searle S."/>
            <person name="Zhou Y."/>
            <person name="Kokocinski F."/>
            <person name="McDonald L."/>
            <person name="Evans R."/>
            <person name="Phillips K."/>
            <person name="Atkinson A."/>
            <person name="Cooper R."/>
            <person name="Jones C."/>
            <person name="Hall R.E."/>
            <person name="Andrews T.D."/>
            <person name="Lloyd C."/>
            <person name="Ainscough R."/>
            <person name="Almeida J.P."/>
            <person name="Ambrose K.D."/>
            <person name="Anderson F."/>
            <person name="Andrew R.W."/>
            <person name="Ashwell R.I.S."/>
            <person name="Aubin K."/>
            <person name="Babbage A.K."/>
            <person name="Bagguley C.L."/>
            <person name="Bailey J."/>
            <person name="Beasley H."/>
            <person name="Bethel G."/>
            <person name="Bird C.P."/>
            <person name="Bray-Allen S."/>
            <person name="Brown J.Y."/>
            <person name="Brown A.J."/>
            <person name="Buckley D."/>
            <person name="Burton J."/>
            <person name="Bye J."/>
            <person name="Carder C."/>
            <person name="Chapman J.C."/>
            <person name="Clark S.Y."/>
            <person name="Clarke G."/>
            <person name="Clee C."/>
            <person name="Cobley V."/>
            <person name="Collier R.E."/>
            <person name="Corby N."/>
            <person name="Coville G.J."/>
            <person name="Davies J."/>
            <person name="Deadman R."/>
            <person name="Dunn M."/>
            <person name="Earthrowl M."/>
            <person name="Ellington A.G."/>
            <person name="Errington H."/>
            <person name="Frankish A."/>
            <person name="Frankland J."/>
            <person name="French L."/>
            <person name="Garner P."/>
            <person name="Garnett J."/>
            <person name="Gay L."/>
            <person name="Ghori M.R.J."/>
            <person name="Gibson R."/>
            <person name="Gilby L.M."/>
            <person name="Gillett W."/>
            <person name="Glithero R.J."/>
            <person name="Grafham D.V."/>
            <person name="Griffiths C."/>
            <person name="Griffiths-Jones S."/>
            <person name="Grocock R."/>
            <person name="Hammond S."/>
            <person name="Harrison E.S.I."/>
            <person name="Hart E."/>
            <person name="Haugen E."/>
            <person name="Heath P.D."/>
            <person name="Holmes S."/>
            <person name="Holt K."/>
            <person name="Howden P.J."/>
            <person name="Hunt A.R."/>
            <person name="Hunt S.E."/>
            <person name="Hunter G."/>
            <person name="Isherwood J."/>
            <person name="James R."/>
            <person name="Johnson C."/>
            <person name="Johnson D."/>
            <person name="Joy A."/>
            <person name="Kay M."/>
            <person name="Kershaw J.K."/>
            <person name="Kibukawa M."/>
            <person name="Kimberley A.M."/>
            <person name="King A."/>
            <person name="Knights A.J."/>
            <person name="Lad H."/>
            <person name="Laird G."/>
            <person name="Lawlor S."/>
            <person name="Leongamornlert D.A."/>
            <person name="Lloyd D.M."/>
            <person name="Loveland J."/>
            <person name="Lovell J."/>
            <person name="Lush M.J."/>
            <person name="Lyne R."/>
            <person name="Martin S."/>
            <person name="Mashreghi-Mohammadi M."/>
            <person name="Matthews L."/>
            <person name="Matthews N.S.W."/>
            <person name="McLaren S."/>
            <person name="Milne S."/>
            <person name="Mistry S."/>
            <person name="Moore M.J.F."/>
            <person name="Nickerson T."/>
            <person name="O'Dell C.N."/>
            <person name="Oliver K."/>
            <person name="Palmeiri A."/>
            <person name="Palmer S.A."/>
            <person name="Parker A."/>
            <person name="Patel D."/>
            <person name="Pearce A.V."/>
            <person name="Peck A.I."/>
            <person name="Pelan S."/>
            <person name="Phelps K."/>
            <person name="Phillimore B.J."/>
            <person name="Plumb R."/>
            <person name="Rajan J."/>
            <person name="Raymond C."/>
            <person name="Rouse G."/>
            <person name="Saenphimmachak C."/>
            <person name="Sehra H.K."/>
            <person name="Sheridan E."/>
            <person name="Shownkeen R."/>
            <person name="Sims S."/>
            <person name="Skuce C.D."/>
            <person name="Smith M."/>
            <person name="Steward C."/>
            <person name="Subramanian S."/>
            <person name="Sycamore N."/>
            <person name="Tracey A."/>
            <person name="Tromans A."/>
            <person name="Van Helmond Z."/>
            <person name="Wall M."/>
            <person name="Wallis J.M."/>
            <person name="White S."/>
            <person name="Whitehead S.L."/>
            <person name="Wilkinson J.E."/>
            <person name="Willey D.L."/>
            <person name="Williams H."/>
            <person name="Wilming L."/>
            <person name="Wray P.W."/>
            <person name="Wu Z."/>
            <person name="Coulson A."/>
            <person name="Vaudin M."/>
            <person name="Sulston J.E."/>
            <person name="Durbin R.M."/>
            <person name="Hubbard T."/>
            <person name="Wooster R."/>
            <person name="Dunham I."/>
            <person name="Carter N.P."/>
            <person name="McVean G."/>
            <person name="Ross M.T."/>
            <person name="Harrow J."/>
            <person name="Olson M.V."/>
            <person name="Beck S."/>
            <person name="Rogers J."/>
            <person name="Bentley D.R."/>
        </authorList>
    </citation>
    <scope>NUCLEOTIDE SEQUENCE [LARGE SCALE GENOMIC DNA]</scope>
</reference>
<reference key="7">
    <citation type="journal article" date="2004" name="Genome Res.">
        <title>The status, quality, and expansion of the NIH full-length cDNA project: the Mammalian Gene Collection (MGC).</title>
        <authorList>
            <consortium name="The MGC Project Team"/>
        </authorList>
    </citation>
    <scope>NUCLEOTIDE SEQUENCE [LARGE SCALE MRNA] (ISOFORM 2)</scope>
    <source>
        <tissue>Cervix</tissue>
        <tissue>Placenta</tissue>
        <tissue>Uterus</tissue>
    </source>
</reference>
<reference key="8">
    <citation type="submission" date="2008-12" db="UniProtKB">
        <authorList>
            <person name="Lubec G."/>
            <person name="Vishwanath V."/>
            <person name="Chen W.-Q."/>
            <person name="Sun Y."/>
        </authorList>
    </citation>
    <scope>PROTEIN SEQUENCE OF 67-83 (ISOFORM 2)</scope>
    <scope>PARTIAL PROTEIN SEQUENCE (ISOFORM 1)</scope>
    <scope>IDENTIFICATION BY MASS SPECTROMETRY</scope>
    <source>
        <tissue>Brain</tissue>
        <tissue>Cajal-Retzius cell</tissue>
        <tissue>Fetal brain cortex</tissue>
    </source>
</reference>
<reference key="9">
    <citation type="journal article" date="1993" name="Biochemistry">
        <title>Regulation of the human neutrophil NADPH oxidase by rho-related G-proteins.</title>
        <authorList>
            <person name="Kwong C.H."/>
            <person name="Malech H.L."/>
            <person name="Rotrosen D."/>
            <person name="Leto T.L."/>
        </authorList>
    </citation>
    <scope>PROTEIN SEQUENCE OF 97-107; 134-144 AND 167-183 (ISOFORM 2)</scope>
    <source>
        <tissue>Neutrophil</tissue>
    </source>
</reference>
<reference key="10">
    <citation type="journal article" date="1989" name="Biochem. Biophys. Res. Commun.">
        <title>Characterization of G25K, a GTP-binding protein containing a novel putative nucleotide binding domain.</title>
        <authorList>
            <person name="Polakis P.G."/>
            <person name="Snyderman R."/>
            <person name="Evans T."/>
        </authorList>
    </citation>
    <scope>PARTIAL PROTEIN SEQUENCE</scope>
</reference>
<reference key="11">
    <citation type="journal article" date="1993" name="Genes Chromosomes Cancer">
        <title>Identification of a novel protein with GDP dissociation inhibitor activity for the ras-like proteins CDC42Hs and rac I.</title>
        <authorList>
            <person name="Adra C.N."/>
            <person name="Ko J."/>
            <person name="Leonard D."/>
            <person name="Wirth L.J."/>
            <person name="Cerione R.A."/>
            <person name="Lim B."/>
        </authorList>
    </citation>
    <scope>INTERACTION WITH ARHGDIB</scope>
</reference>
<reference key="12">
    <citation type="journal article" date="1995" name="Nature">
        <title>Glucosylation of Rho proteins by Clostridium difficile toxin B.</title>
        <authorList>
            <person name="Just I."/>
            <person name="Selzer J."/>
            <person name="Wilm M."/>
            <person name="von Eichel-Streiber C."/>
            <person name="Mann M."/>
            <person name="Aktories K."/>
        </authorList>
    </citation>
    <scope>GLYCOSYLATION AT THR-35 (MICROBIAL INFECTION)</scope>
</reference>
<reference key="13">
    <citation type="journal article" date="1995" name="J. Biol. Chem.">
        <title>The enterotoxin from Clostridium difficile (ToxA) monoglucosylates the Rho proteins.</title>
        <authorList>
            <person name="Just I."/>
            <person name="Wilm M."/>
            <person name="Selzer J."/>
            <person name="Rex G."/>
            <person name="von Eichel-Streiber C."/>
            <person name="Mann M."/>
            <person name="Aktories K."/>
        </authorList>
    </citation>
    <scope>GLYCOSYLATION AT THR-35 (MICROBIAL INFECTION)</scope>
</reference>
<reference key="14">
    <citation type="journal article" date="1996" name="J. Biol. Chem.">
        <title>Clostridium novyi alpha-toxin-catalyzed incorporation of GlcNAc into Rho subfamily proteins.</title>
        <authorList>
            <person name="Selzer J."/>
            <person name="Hofmann F."/>
            <person name="Rex G."/>
            <person name="Wilm M."/>
            <person name="Mann M."/>
            <person name="Just I."/>
            <person name="Aktories K."/>
        </authorList>
    </citation>
    <scope>GLYCOSYLATION AT THR-35 (MICROBIAL INFECTION)</scope>
</reference>
<reference key="15">
    <citation type="journal article" date="1999" name="Mol. Cell. Biol.">
        <title>The Borgs, a new family of Cdc42 and TC10 GTPase-interacting proteins.</title>
        <authorList>
            <person name="Joberty G."/>
            <person name="Perlungher R.R."/>
            <person name="Macara I.G."/>
        </authorList>
    </citation>
    <scope>INTERACTION WITH CDC42EP1; CDC42EP2; CDC42EP3 AND CDC42EP5</scope>
    <source>
        <tissue>Embryo</tissue>
    </source>
</reference>
<reference key="16">
    <citation type="journal article" date="1999" name="Nat. Cell Biol.">
        <title>Melanoma chondroitin sulphate proteoglycan regulates cell spreading through Cdc42, Ack-1 and p130cas.</title>
        <authorList>
            <person name="Eisenmann K.M."/>
            <person name="McCarthy J.B."/>
            <person name="Simpson M.A."/>
            <person name="Keely P.J."/>
            <person name="Guan J.-L."/>
            <person name="Tachibana K."/>
            <person name="Lim L."/>
            <person name="Manser E."/>
            <person name="Furcht L.T."/>
            <person name="Iida J."/>
        </authorList>
    </citation>
    <scope>INTERACTION WITH CSPG4</scope>
</reference>
<reference key="17">
    <citation type="journal article" date="2000" name="J. Biol. Chem.">
        <title>SPECs, small binding proteins for Cdc42.</title>
        <authorList>
            <person name="Pirone D.M."/>
            <person name="Fukuhara S."/>
            <person name="Gutkind J.S."/>
            <person name="Burbelo P.D."/>
        </authorList>
    </citation>
    <scope>INTERACTION WITH CDC42SE1 AND CDC42SE2</scope>
</reference>
<reference key="18">
    <citation type="journal article" date="2000" name="J. Cell Sci.">
        <title>The mammalian homologue of the Caenorhabditis elegans polarity protein PAR-6 is a binding partner for the Rho GTPases Cdc42 and Rac1.</title>
        <authorList>
            <person name="Johansson A.-S."/>
            <person name="Driessens M."/>
            <person name="Aspenstroem P."/>
        </authorList>
    </citation>
    <scope>INTERACTION WITH PARD6A</scope>
    <scope>MUTAGENESIS OF GLY-12</scope>
</reference>
<reference key="19">
    <citation type="journal article" date="2000" name="Nature">
        <title>IRSp53 is an essential intermediate between Rac and WAVE in the regulation of membrane ruffling.</title>
        <authorList>
            <person name="Miki H."/>
            <person name="Yamaguchi H."/>
            <person name="Suetsugu S."/>
            <person name="Takenawa T."/>
        </authorList>
    </citation>
    <scope>INTERACTION WITH BAIAP2</scope>
</reference>
<reference key="20">
    <citation type="journal article" date="2001" name="Genes Cells">
        <title>Human homologues of the Caenorhabditis elegans cell polarity protein PAR6 as an adaptor that links the small GTPases Rac and Cdc42 to atypical protein kinase C.</title>
        <authorList>
            <person name="Noda Y."/>
            <person name="Takeya R."/>
            <person name="Ohno S."/>
            <person name="Naito S."/>
            <person name="Ito T."/>
            <person name="Sumimoto H."/>
        </authorList>
    </citation>
    <scope>INTERACTION WITH PARD6A; PARD6B AND PARD6G</scope>
    <scope>SUBUNIT OF A COMPLEX CONTAINING PRKCI AND PARD6B</scope>
    <scope>MUTAGENESIS OF THR-17 AND GLN-61</scope>
</reference>
<reference key="21">
    <citation type="journal article" date="2002" name="J. Cell Biol.">
        <title>The integrin cytoplasmic domain-associated protein ICAP-1 binds and regulates Rho family GTPases during cell spreading.</title>
        <authorList>
            <person name="Degani S."/>
            <person name="Balzac F."/>
            <person name="Brancaccio M."/>
            <person name="Guazzone S."/>
            <person name="Retta S.F."/>
            <person name="Silengo L."/>
            <person name="Eva A."/>
            <person name="Tarone G."/>
        </authorList>
    </citation>
    <scope>INTERACTION WITH ITGB1BP1</scope>
</reference>
<reference key="22">
    <citation type="journal article" date="2002" name="Nat. Cell Biol.">
        <title>Zizimin1, a novel Cdc42 activator, reveals a new GEF domain for Rho proteins.</title>
        <authorList>
            <person name="Meller N."/>
            <person name="Irani-Tehrani M."/>
            <person name="Kiosses W.B."/>
            <person name="Del Pozo M.A."/>
            <person name="Schwartz M.A."/>
        </authorList>
    </citation>
    <scope>INTERACTION WITH DOCK9</scope>
    <scope>ACTIVATION BY DOCK9</scope>
</reference>
<reference key="23">
    <citation type="journal article" date="2003" name="J. Biol. Chem.">
        <title>Epidermal growth factor-dependent regulation of Cdc42 is mediated by the Src tyrosine kinase.</title>
        <authorList>
            <person name="Tu S."/>
            <person name="Wu W.J."/>
            <person name="Wang J."/>
            <person name="Cerione R.A."/>
        </authorList>
    </citation>
    <scope>PHOSPHORYLATION AT TYR-64 BY SRC</scope>
</reference>
<reference key="24">
    <citation type="journal article" date="2003" name="Mol. Cell. Biol.">
        <title>The TRE17 oncogene encodes a component of a novel effector pathway for Rho GTPases Cdc42 and Rac1 and stimulates actin remodeling.</title>
        <authorList>
            <person name="Masuda-Robens J.M."/>
            <person name="Kutney S.N."/>
            <person name="Qi H."/>
            <person name="Chou M.M."/>
        </authorList>
    </citation>
    <scope>INTERACTION WITH USP6</scope>
</reference>
<reference key="25">
    <citation type="journal article" date="2004" name="Mol. Biol. Cell">
        <title>Regulation of dendritic branching and filopodia formation in hippocampal neurons by specific acylated protein motifs.</title>
        <authorList>
            <person name="Gauthier-Campbell C."/>
            <person name="Bredt D.S."/>
            <person name="Murphy T.H."/>
            <person name="El-Husseini A."/>
        </authorList>
    </citation>
    <scope>FUNCTION</scope>
    <scope>MUTAGENESIS OF GLY-12 AND THR-17</scope>
</reference>
<reference key="26">
    <citation type="journal article" date="2005" name="J. Cell Biol.">
        <title>Ect2 and MgcRacGAP regulate the activation and function of Cdc42 in mitosis.</title>
        <authorList>
            <person name="Oceguera-Yanez F."/>
            <person name="Kimura K."/>
            <person name="Yasuda S."/>
            <person name="Higashida C."/>
            <person name="Kitamura T."/>
            <person name="Hiraoka Y."/>
            <person name="Haraguchi T."/>
            <person name="Narumiya S."/>
        </authorList>
    </citation>
    <scope>FUNCTION</scope>
    <scope>SUBCELLULAR LOCATION</scope>
</reference>
<reference key="27">
    <citation type="journal article" date="2006" name="J. Biol. Chem.">
        <title>Ack1 mediates Cdc42-dependent cell migration and signaling to p130Cas.</title>
        <authorList>
            <person name="Modzelewska K."/>
            <person name="Newman L.P."/>
            <person name="Desai R."/>
            <person name="Keely P.J."/>
        </authorList>
    </citation>
    <scope>FUNCTION IN CELL MIGRATION</scope>
    <scope>INTERACTION WITH BCAR1; TNK2 AND CRK</scope>
</reference>
<reference key="28">
    <citation type="journal article" date="2008" name="Nat. Med.">
        <title>Modification of mineralocorticoid receptor function by Rac1 GTPase: implication in proteinuric kidney disease.</title>
        <authorList>
            <person name="Shibata S."/>
            <person name="Nagase M."/>
            <person name="Yoshida S."/>
            <person name="Kawarazaki W."/>
            <person name="Kurihara H."/>
            <person name="Tanaka H."/>
            <person name="Miyoshi J."/>
            <person name="Takai Y."/>
            <person name="Fujita T."/>
        </authorList>
    </citation>
    <scope>MUTAGENESIS OF GLY-12 AND THR-17</scope>
</reference>
<reference key="29">
    <citation type="journal article" date="2009" name="Mol. Cell">
        <title>The fic domain: regulation of cell signaling by adenylylation.</title>
        <authorList>
            <person name="Worby C.A."/>
            <person name="Mattoo S."/>
            <person name="Kruger R.P."/>
            <person name="Corbeil L.B."/>
            <person name="Koller A."/>
            <person name="Mendez J.C."/>
            <person name="Zekarias B."/>
            <person name="Lazar C."/>
            <person name="Dixon J.E."/>
        </authorList>
    </citation>
    <scope>AMPYLATION AT TYR-32 (MICROBIAL INFECTION)</scope>
    <scope>MUTAGENESIS OF TYR-32</scope>
</reference>
<reference key="30">
    <citation type="journal article" date="2009" name="PLoS Genet.">
        <title>Requirements for F-BAR proteins TOCA-1 and TOCA-2 in actin dynamics and membrane trafficking during Caenorhabditis elegans oocyte growth and embryonic epidermal morphogenesis.</title>
        <authorList>
            <person name="Giuliani C."/>
            <person name="Troglio F."/>
            <person name="Bai Z."/>
            <person name="Patel F.B."/>
            <person name="Zucconi A."/>
            <person name="Malabarba M.G."/>
            <person name="Disanza A."/>
            <person name="Stradal T.B."/>
            <person name="Cassata G."/>
            <person name="Confalonieri S."/>
            <person name="Hardin J.D."/>
            <person name="Soto M.C."/>
            <person name="Grant B.D."/>
            <person name="Scita G."/>
        </authorList>
    </citation>
    <scope>INTERACTION WITH FNBP1L</scope>
</reference>
<reference key="31">
    <citation type="journal article" date="2009" name="Science">
        <title>AMPylation of Rho GTPases by Vibrio VopS disrupts effector binding and downstream signaling.</title>
        <authorList>
            <person name="Yarbrough M.L."/>
            <person name="Li Y."/>
            <person name="Kinch L.N."/>
            <person name="Grishin N.V."/>
            <person name="Ball H.L."/>
            <person name="Orth K."/>
        </authorList>
    </citation>
    <scope>AMPYLATION AT THR-35 (MICROBIAL INFECTION)</scope>
</reference>
<reference key="32">
    <citation type="journal article" date="2010" name="J. Proteome Res.">
        <title>Characterization of hNek6 interactome reveals an important role for its short N-terminal domain and colocalization with proteins at the centrosome.</title>
        <authorList>
            <person name="Vaz Meirelles G."/>
            <person name="Ferreira Lanza D.C."/>
            <person name="da Silva J.C."/>
            <person name="Santana Bernachi J."/>
            <person name="Paes Leme A.F."/>
            <person name="Kobarg J."/>
        </authorList>
    </citation>
    <scope>SUBCELLULAR LOCATION</scope>
    <scope>INTERACTION WITH NEK6</scope>
</reference>
<reference key="33">
    <citation type="journal article" date="2011" name="Biochem. Biophys. Res. Commun.">
        <title>ARHGAP30 is a Wrch-1-interacting protein involved in actin dynamics and cell adhesion.</title>
        <authorList>
            <person name="Naji L."/>
            <person name="Pacholsky D."/>
            <person name="Aspenstrom P."/>
        </authorList>
    </citation>
    <scope>CATALYTIC ACTIVITY</scope>
</reference>
<reference key="34">
    <citation type="journal article" date="2011" name="BMC Syst. Biol.">
        <title>Initial characterization of the human central proteome.</title>
        <authorList>
            <person name="Burkard T.R."/>
            <person name="Planyavsky M."/>
            <person name="Kaupe I."/>
            <person name="Breitwieser F.P."/>
            <person name="Buerckstuemmer T."/>
            <person name="Bennett K.L."/>
            <person name="Superti-Furga G."/>
            <person name="Colinge J."/>
        </authorList>
    </citation>
    <scope>IDENTIFICATION BY MASS SPECTROMETRY [LARGE SCALE ANALYSIS]</scope>
</reference>
<reference key="35">
    <citation type="journal article" date="2011" name="Br. J. Cancer">
        <title>The HPV16 E6 binding protein Tip-1 interacts with ARHGEF16, which activates Cdc42.</title>
        <authorList>
            <person name="Oliver A.W."/>
            <person name="He X."/>
            <person name="Borthwick K."/>
            <person name="Donne A.J."/>
            <person name="Hampson L."/>
            <person name="Hampson I.N."/>
        </authorList>
    </citation>
    <scope>INTERACTION WITH ARHGEF16</scope>
</reference>
<reference key="36">
    <citation type="journal article" date="2012" name="J. Biol. Chem.">
        <title>Tetraspanin CD151 stimulates adhesion-dependent activation of Ras, Rac, and Cdc42 by facilitating molecular association between beta1 integrins and small GTPases.</title>
        <authorList>
            <person name="Hong I.K."/>
            <person name="Jeoung D.I."/>
            <person name="Ha K.S."/>
            <person name="Kim Y.M."/>
            <person name="Lee H."/>
        </authorList>
    </citation>
    <scope>FUNCTION</scope>
    <scope>INTERACTION WITH CD151 AND INTEGRIN BETA1/ITGB1</scope>
</reference>
<reference key="37">
    <citation type="journal article" date="2013" name="J. Cell Biol.">
        <title>The GEF Bcr activates RhoA/MAL signaling to promote keratinocyte differentiation via desmoglein-1.</title>
        <authorList>
            <person name="Dubash A.D."/>
            <person name="Koetsier J.L."/>
            <person name="Amargo E.V."/>
            <person name="Najor N.A."/>
            <person name="Harmon R.M."/>
            <person name="Green K.J."/>
        </authorList>
    </citation>
    <scope>CATALYTIC ACTIVITY</scope>
</reference>
<reference key="38">
    <citation type="journal article" date="2013" name="J. Med. Genet.">
        <title>ARHGDIA: a novel gene implicated in nephrotic syndrome.</title>
        <authorList>
            <person name="Gupta I.R."/>
            <person name="Baldwin C."/>
            <person name="Auguste D."/>
            <person name="Ha K.C."/>
            <person name="El Andalousi J."/>
            <person name="Fahiminiya S."/>
            <person name="Bitzan M."/>
            <person name="Bernard C."/>
            <person name="Akbari M.R."/>
            <person name="Narod S.A."/>
            <person name="Rosenblatt D.S."/>
            <person name="Majewski J."/>
            <person name="Takano T."/>
        </authorList>
    </citation>
    <scope>INTERACTION WITH ARHGDIA</scope>
</reference>
<reference key="39">
    <citation type="journal article" date="2013" name="Nat. Struct. Mol. Biol.">
        <title>A bacterial toxin catalyzing tyrosine glycosylation of Rho and deamidation of Gq and Gi proteins.</title>
        <authorList>
            <person name="Jank T."/>
            <person name="Bogdanovic X."/>
            <person name="Wirth C."/>
            <person name="Haaf E."/>
            <person name="Spoerner M."/>
            <person name="Boehmer K.E."/>
            <person name="Steinemann M."/>
            <person name="Orth J.H."/>
            <person name="Kalbitzer H.R."/>
            <person name="Warscheid B."/>
            <person name="Hunte C."/>
            <person name="Aktories K."/>
        </authorList>
    </citation>
    <scope>GLYCOSYLATION AT TYR-32 (MICROBIAL INFECTION)</scope>
</reference>
<reference key="40">
    <citation type="journal article" date="2014" name="Cell. Microbiol.">
        <title>Haemorrhagic toxin and lethal toxin from Clostridium sordellii strain vpi9048: molecular characterization and comparative analysis of substrate specificity of the large clostridial glucosylating toxins.</title>
        <authorList>
            <person name="Genth H."/>
            <person name="Pauillac S."/>
            <person name="Schelle I."/>
            <person name="Bouvet P."/>
            <person name="Bouchier C."/>
            <person name="Varela-Chavez C."/>
            <person name="Just I."/>
            <person name="Popoff M.R."/>
        </authorList>
    </citation>
    <scope>GLYCOSYLATION AT THR-35 (MICROBIAL INFECTION)</scope>
</reference>
<reference key="41">
    <citation type="journal article" date="2015" name="Nat. Commun.">
        <title>Phosphoinositide 3-kinase enables phagocytosis of large particles by terminating actin assembly through Rac/Cdc42 GTPase-activating proteins.</title>
        <authorList>
            <person name="Schlam D."/>
            <person name="Bagshaw R.D."/>
            <person name="Freeman S.A."/>
            <person name="Collins R.F."/>
            <person name="Pawson T."/>
            <person name="Fairn G.D."/>
            <person name="Grinstein S."/>
        </authorList>
    </citation>
    <scope>FUNCTION</scope>
</reference>
<reference key="42">
    <citation type="journal article" date="2015" name="Proteomics">
        <title>N-terminome analysis of the human mitochondrial proteome.</title>
        <authorList>
            <person name="Vaca Jacome A.S."/>
            <person name="Rabilloud T."/>
            <person name="Schaeffer-Reiss C."/>
            <person name="Rompais M."/>
            <person name="Ayoub D."/>
            <person name="Lane L."/>
            <person name="Bairoch A."/>
            <person name="Van Dorsselaer A."/>
            <person name="Carapito C."/>
        </authorList>
    </citation>
    <scope>IDENTIFICATION BY MASS SPECTROMETRY [LARGE SCALE ANALYSIS]</scope>
</reference>
<reference key="43">
    <citation type="journal article" date="2021" name="J. Cell Sci.">
        <title>PLEKHG4B enables actin cytoskeletal remodeling during epithelial cell-cell junction formation.</title>
        <authorList>
            <person name="Ninomiya K."/>
            <person name="Ohta K."/>
            <person name="Yamashita K."/>
            <person name="Mizuno K."/>
            <person name="Ohashi K."/>
        </authorList>
    </citation>
    <scope>FUNCTION</scope>
</reference>
<reference key="44">
    <citation type="journal article" date="2021" name="Sci. Adv.">
        <title>Recessive NOS1AP variants impair actin remodeling and cause glomerulopathy in humans and mice.</title>
        <authorList>
            <person name="Majmundar A.J."/>
            <person name="Buerger F."/>
            <person name="Forbes T.A."/>
            <person name="Klaembt V."/>
            <person name="Schneider R."/>
            <person name="Deutsch K."/>
            <person name="Kitzler T.M."/>
            <person name="Howden S.E."/>
            <person name="Scurr M."/>
            <person name="Tan K.S."/>
            <person name="Krzeminski M."/>
            <person name="Widmeier E."/>
            <person name="Braun D.A."/>
            <person name="Lai E."/>
            <person name="Ullah I."/>
            <person name="Amar A."/>
            <person name="Kolb A."/>
            <person name="Eddy K."/>
            <person name="Chen C.H."/>
            <person name="Salmanullah D."/>
            <person name="Dai R."/>
            <person name="Nakayama M."/>
            <person name="Ottlewski I."/>
            <person name="Kolvenbach C.M."/>
            <person name="Onuchic-Whitford A.C."/>
            <person name="Mao Y."/>
            <person name="Mann N."/>
            <person name="Nabhan M.M."/>
            <person name="Rosen S."/>
            <person name="Forman-Kay J.D."/>
            <person name="Soliman N.A."/>
            <person name="Heilos A."/>
            <person name="Kain R."/>
            <person name="Aufricht C."/>
            <person name="Mane S."/>
            <person name="Lifton R.P."/>
            <person name="Shril S."/>
            <person name="Little M.H."/>
            <person name="Hildebrandt F."/>
        </authorList>
    </citation>
    <scope>FUNCTION</scope>
</reference>
<reference key="45">
    <citation type="journal article" date="1997" name="Biochemistry">
        <title>Definition of the switch surface in the solution structure of Cdc42Hs.</title>
        <authorList>
            <person name="Feltham J.L."/>
            <person name="Dotsch V."/>
            <person name="Raza S."/>
            <person name="Manor D."/>
            <person name="Cerione R.A."/>
            <person name="Sutcliffe M.J."/>
            <person name="Wagner G."/>
            <person name="Oswald R.E."/>
        </authorList>
    </citation>
    <scope>STRUCTURE BY NMR</scope>
</reference>
<reference key="46">
    <citation type="journal article" date="1998" name="Biochemistry">
        <title>Identification of the binding surface on Cdc42Hs for p21-activated kinase.</title>
        <authorList>
            <person name="Guo W."/>
            <person name="Sutcliffe M.J."/>
            <person name="Cerione R.A."/>
            <person name="Oswald R.E."/>
        </authorList>
    </citation>
    <scope>STRUCTURE BY NMR</scope>
</reference>
<reference key="47">
    <citation type="journal article" date="1997" name="Nature">
        <title>Crystal structure of a small G protein in complex with the GTPase-activating protein rhoGAP.</title>
        <authorList>
            <person name="Rittinger K."/>
            <person name="Walker P.A."/>
            <person name="Eccleston J.F."/>
            <person name="Nurmahomed K."/>
            <person name="Owen D."/>
            <person name="Laue E."/>
            <person name="Gamblin S.J."/>
            <person name="Smerdon S.J."/>
        </authorList>
    </citation>
    <scope>X-RAY CRYSTALLOGRAPHY (2.7 ANGSTROMS) OF COMPLEX WITH RHOGAP</scope>
</reference>
<reference key="48">
    <citation type="journal article" date="1999" name="Protein Sci.">
        <title>Nucleotide binding to the G12V-mutant of Cdc42 investigated by X-ray diffraction and fluorescence spectroscopy: two different nucleotide states in one crystal.</title>
        <authorList>
            <person name="Rudolph M.G."/>
            <person name="Wittinghofer A."/>
            <person name="Vetter I.R."/>
        </authorList>
    </citation>
    <scope>X-RAY CRYSTALLOGRAPHY (2.5 ANGSTROMS) OF VAL-12 MUTANT</scope>
</reference>
<reference key="49">
    <citation type="submission" date="1997-06" db="PDB data bank">
        <title>The structure determination of CDC42Hs and GDP complex.</title>
        <authorList>
            <person name="Kongsaeree P."/>
            <person name="Cerione R.A."/>
            <person name="Clardy J.C."/>
        </authorList>
    </citation>
    <scope>X-RAY CRYSTALLOGRAPHY (2.8 ANGSTROMS)</scope>
</reference>
<reference evidence="50" key="50">
    <citation type="journal article" date="2000" name="Cell">
        <title>Structure of the Rho family GTP-binding protein Cdc42 in complex with the multifunctional regulator RhoGDI.</title>
        <authorList>
            <person name="Hoffman G.R."/>
            <person name="Nassar N."/>
            <person name="Cerione R.A."/>
        </authorList>
    </citation>
    <scope>X-RAY CRYSTALLOGRAPHY (2.60 ANGSTROMS) OF 1-188</scope>
    <scope>ISOPRENYLATION AT CYS-188</scope>
    <scope>METHYLATION AT CYS-188</scope>
</reference>
<reference key="51">
    <citation type="journal article" date="2009" name="Science">
        <title>Activation of Rho GTPases by DOCK exchange factors is mediated by a nucleotide sensor.</title>
        <authorList>
            <person name="Yang J."/>
            <person name="Zhang Z."/>
            <person name="Roe S.M."/>
            <person name="Marshall C.J."/>
            <person name="Barford D."/>
        </authorList>
    </citation>
    <scope>X-RAY CRYSTALLOGRAPHY (2.2 ANGSTROMS) OF 1-188 IN COMPLEX WITH DOCK9</scope>
</reference>
<reference key="52">
    <citation type="journal article" date="2010" name="Nat. Struct. Mol. Biol.">
        <title>Structural basis of Fic-mediated adenylylation.</title>
        <authorList>
            <person name="Xiao J."/>
            <person name="Worby C.A."/>
            <person name="Mattoo S."/>
            <person name="Sankaran B."/>
            <person name="Dixon J.E."/>
        </authorList>
    </citation>
    <scope>X-RAY CRYSTALLOGRAPHY (2.3 ANGSTROMS) OF 1-181 IN COMPLEX WITH H.SOMNUS IBPA AND GDP</scope>
    <scope>AMPYLATION AT TYR-32 (MICROBIAL INFECTION)</scope>
</reference>
<reference key="53">
    <citation type="journal article" date="2012" name="Blood">
        <title>DOCK8 is a Cdc42 activator critical for interstitial dendritic cell migration during immune responses.</title>
        <authorList>
            <person name="Harada Y."/>
            <person name="Tanaka Y."/>
            <person name="Terasawa M."/>
            <person name="Pieczyk M."/>
            <person name="Habiro K."/>
            <person name="Katakai T."/>
            <person name="Hanawa-Suetsugu K."/>
            <person name="Kukimoto-Niino M."/>
            <person name="Nishizaki T."/>
            <person name="Shirouzu M."/>
            <person name="Duan X."/>
            <person name="Uruno T."/>
            <person name="Nishikimi A."/>
            <person name="Sanematsu F."/>
            <person name="Yokoyama S."/>
            <person name="Stein J.V."/>
            <person name="Kinashi T."/>
            <person name="Fukui Y."/>
        </authorList>
    </citation>
    <scope>X-RAY CRYSTALLOGRAPHY (2.08 ANGSTROMS) OF 1-188 IN COMPLEX WITH MOUSE DOCK8</scope>
    <scope>ACTIVITY REGULATION</scope>
</reference>
<reference key="54">
    <citation type="journal article" date="2015" name="Am. J. Med. Genet. A">
        <title>Macrothrombocytopenia and developmental delay with a de novo CDC42 mutation: Yet another locus for thrombocytopenia and developmental delay.</title>
        <authorList>
            <person name="Takenouchi T."/>
            <person name="Kosaki R."/>
            <person name="Niizuma T."/>
            <person name="Hata K."/>
            <person name="Kosaki K."/>
        </authorList>
    </citation>
    <scope>INVOLVEMENT IN TKS</scope>
    <scope>VARIANT TKS CYS-64</scope>
</reference>
<reference key="55">
    <citation type="journal article" date="2016" name="Am. J. Med. Genet. A">
        <title>Further evidence of a mutation in CDC42 as a cause of a recognizable syndromic form of thrombocytopenia.</title>
        <authorList>
            <person name="Takenouchi T."/>
            <person name="Okamoto N."/>
            <person name="Ida S."/>
            <person name="Uehara T."/>
            <person name="Kosaki K."/>
        </authorList>
    </citation>
    <scope>VARIANT TKS CYS-64</scope>
</reference>
<keyword id="KW-0002">3D-structure</keyword>
<keyword id="KW-0025">Alternative splicing</keyword>
<keyword id="KW-1003">Cell membrane</keyword>
<keyword id="KW-0966">Cell projection</keyword>
<keyword id="KW-0963">Cytoplasm</keyword>
<keyword id="KW-0206">Cytoskeleton</keyword>
<keyword id="KW-0221">Differentiation</keyword>
<keyword id="KW-0903">Direct protein sequencing</keyword>
<keyword id="KW-0225">Disease variant</keyword>
<keyword id="KW-0325">Glycoprotein</keyword>
<keyword id="KW-0342">GTP-binding</keyword>
<keyword id="KW-0378">Hydrolase</keyword>
<keyword id="KW-0991">Intellectual disability</keyword>
<keyword id="KW-0449">Lipoprotein</keyword>
<keyword id="KW-0472">Membrane</keyword>
<keyword id="KW-0488">Methylation</keyword>
<keyword id="KW-0524">Neurogenesis</keyword>
<keyword id="KW-0547">Nucleotide-binding</keyword>
<keyword id="KW-0597">Phosphoprotein</keyword>
<keyword id="KW-0636">Prenylation</keyword>
<keyword id="KW-1267">Proteomics identification</keyword>
<keyword id="KW-1185">Reference proteome</keyword>